<protein>
    <recommendedName>
        <fullName>Beta-galactosidase</fullName>
        <ecNumber evidence="14 28 31 32 33 35 38">3.2.1.23</ecNumber>
    </recommendedName>
    <alternativeName>
        <fullName>Acid beta-galactosidase</fullName>
        <shortName>Lactase</shortName>
    </alternativeName>
    <alternativeName>
        <fullName>Elastin receptor 1</fullName>
    </alternativeName>
</protein>
<comment type="function">
    <molecule>Isoform 1</molecule>
    <text evidence="14 28 32 33 38">Cleaves beta-linked terminal galactosyl residues from gangliosides, glycoproteins, and glycosaminoglycans.</text>
</comment>
<comment type="function">
    <molecule>Isoform 2</molecule>
    <text evidence="6 41">Has no beta-galactosidase catalytic activity, but plays functional roles in the formation of extracellular elastic fibers (elastogenesis) and in the development of connective tissue. Seems to be identical to the elastin-binding protein (EBP), a major component of the non-integrin cell surface receptor expressed on fibroblasts, smooth muscle cells, chondroblasts, leukocytes, and certain cancer cell types. In elastin producing cells, associates with tropoelastin intracellularly and functions as a recycling molecular chaperone which facilitates the secretions of tropoelastin and its assembly into elastic fibers.</text>
</comment>
<comment type="catalytic activity">
    <reaction evidence="14 28 31 32 33 35 38">
        <text>Hydrolysis of terminal non-reducing beta-D-galactose residues in beta-D-galactosides.</text>
        <dbReference type="EC" id="3.2.1.23"/>
    </reaction>
</comment>
<comment type="biophysicochemical properties">
    <phDependence>
        <text>Optimum pH is 4.5-5.5.</text>
    </phDependence>
</comment>
<comment type="subunit">
    <text evidence="30 54">Homodimer (PubMed:22128166). May form higher multimers (Probable).</text>
</comment>
<comment type="interaction">
    <interactant intactId="EBI-989638">
        <id>P16278</id>
    </interactant>
    <interactant intactId="EBI-712073">
        <id>Q8NBJ4</id>
        <label>GOLM1</label>
    </interactant>
    <organismsDiffer>false</organismsDiffer>
    <experiments>3</experiments>
</comment>
<comment type="interaction">
    <interactant intactId="EBI-989638">
        <id>P16278</id>
    </interactant>
    <interactant intactId="EBI-18159983">
        <id>Q3KNW5</id>
        <label>SLC10A6</label>
    </interactant>
    <organismsDiffer>false</organismsDiffer>
    <experiments>3</experiments>
</comment>
<comment type="interaction">
    <interactant intactId="EBI-989638">
        <id>P16278</id>
    </interactant>
    <interactant intactId="EBI-8644112">
        <id>Q9BRI3</id>
        <label>SLC30A2</label>
    </interactant>
    <organismsDiffer>false</organismsDiffer>
    <experiments>3</experiments>
</comment>
<comment type="interaction">
    <interactant intactId="EBI-989638">
        <id>P16278</id>
    </interactant>
    <interactant intactId="EBI-4289564">
        <id>P30825</id>
        <label>SLC7A1</label>
    </interactant>
    <organismsDiffer>false</organismsDiffer>
    <experiments>3</experiments>
</comment>
<comment type="subcellular location">
    <molecule>Isoform 1</molecule>
    <subcellularLocation>
        <location evidence="32 34">Lysosome</location>
    </subcellularLocation>
</comment>
<comment type="subcellular location">
    <molecule>Isoform 2</molecule>
    <subcellularLocation>
        <location evidence="32">Cytoplasm</location>
        <location evidence="32">Perinuclear region</location>
    </subcellularLocation>
    <text evidence="32">Localized to the perinuclear area of the cytoplasm but not to lysosomes.</text>
</comment>
<comment type="alternative products">
    <event type="alternative splicing"/>
    <isoform>
        <id>P16278-1</id>
        <name>1</name>
        <sequence type="displayed"/>
    </isoform>
    <isoform>
        <id>P16278-2</id>
        <id>P16279-1</id>
        <name>2</name>
        <name evidence="48">Beta-galactosidase-related protein</name>
        <name>Beta-galactosidase-like protein</name>
        <name evidence="49">S-Gal</name>
        <name>Elastin-binding protein</name>
        <name evidence="50">EBP</name>
        <sequence type="described" ref="VSP_031241"/>
    </isoform>
    <isoform>
        <id>P16278-3</id>
        <name>3</name>
        <sequence type="described" ref="VSP_039974"/>
    </isoform>
</comment>
<comment type="tissue specificity">
    <text evidence="32 40">Detected in placenta (at protein level) (PubMed:8383699). Detected in fibroblasts and testis (PubMed:2511208).</text>
</comment>
<comment type="polymorphism">
    <text evidence="14 19 20 23">The sequence shown in this entry differs from the translation of the reference genome assembly (GRCh38/hg38) due to a polymorphic change creating a Cys at position 521 in the reference genome (PubMed:16641997). The sequence shown in this entry is that of variant p.Cys521Arg, which has a frequency of about 99% in the human population according to the Genome Aggregation Database (gnomAD v4.1.0), and gives rise to a fully active beta-galactosidase (PubMed:15714521, PubMed:16941474, PubMed:17664528).</text>
</comment>
<comment type="disease" evidence="3 4 5 11 12 14 15 18 20 21 23 24 25 27 28 31 33 39 43 45">
    <disease id="DI-00532">
        <name>GM1-gangliosidosis 1</name>
        <acronym>GM1G1</acronym>
        <description>An autosomal recessive lysosomal storage disease marked by the accumulation of GM1 gangliosides, glycoproteins and keratan sulfate primarily in neurons of the central nervous system. GM1-gangliosidosis type 1 is characterized by onset within the first three months of life, central nervous system degeneration, coarse facial features, hepatosplenomegaly, skeletal dysmorphology reminiscent of Hurler syndrome, and rapidly progressive psychomotor deterioration. Urinary oligosaccharide levels are high. It leads to death usually between the first and second year of life.</description>
        <dbReference type="MIM" id="230500"/>
    </disease>
    <text>The disease is caused by variants affecting the gene represented in this entry.</text>
</comment>
<comment type="disease" evidence="4 9 14 20 21 24 25 28 31 33 39">
    <disease id="DI-00533">
        <name>GM1-gangliosidosis 2</name>
        <acronym>GM1G2</acronym>
        <description>A gangliosidosis characterized by onset between ages 1 and 5. The main symptom is locomotor ataxia, ultimately leading to a state of decerebration with epileptic seizures. Patients do not display the skeletal changes associated with the infantile form, but they nonetheless excrete elevated amounts of beta-linked galactose-terminal oligosaccharides. Inheritance is autosomal recessive.</description>
        <dbReference type="MIM" id="230600"/>
    </disease>
    <text>The disease is caused by variants affecting the gene represented in this entry.</text>
</comment>
<comment type="disease" evidence="7 14 16 20 21 23 24 25 28 31 33 37 43 44">
    <disease id="DI-00534">
        <name>GM1-gangliosidosis 3</name>
        <acronym>GM1G3</acronym>
        <description>A gangliosidosis with a variable phenotype. Patients show mild skeletal abnormalities, dysarthria, gait disturbance, dystonia and visual impairment. Visceromegaly is absent. Intellectual deficit can initially be mild or absent but progresses over time. Inheritance is autosomal recessive.</description>
        <dbReference type="MIM" id="230650"/>
    </disease>
    <text>The disease is caused by variants affecting the gene represented in this entry.</text>
</comment>
<comment type="disease" evidence="7 8 18 20 23 27 28 36">
    <disease id="DI-00779">
        <name>Mucopolysaccharidosis 4B</name>
        <acronym>MPS4B</acronym>
        <description>A form of mucopolysaccharidosis type 4, an autosomal recessive lysosomal storage disease characterized by intracellular accumulation of keratan sulfate and chondroitin-6-sulfate. Key clinical features include short stature, skeletal dysplasia, dental anomalies, and corneal clouding. Intelligence is normal and there is no direct central nervous system involvement, although the skeletal changes may result in neurologic complications. There is variable severity, but patients with the severe phenotype usually do not survive past the second or third decade of life.</description>
        <dbReference type="MIM" id="253010"/>
    </disease>
    <text>The disease is caused by variants affecting the gene represented in this entry.</text>
</comment>
<comment type="similarity">
    <text evidence="51">Belongs to the glycosyl hydrolase 35 family.</text>
</comment>
<comment type="online information" name="Wikipedia">
    <link uri="https://en.wikipedia.org/wiki/Beta-galactosidase"/>
    <text>Beta-galactosidase entry</text>
</comment>
<gene>
    <name type="primary">GLB1</name>
    <name type="synonym">ELNR1</name>
</gene>
<name>BGAL_HUMAN</name>
<evidence type="ECO:0000255" key="1"/>
<evidence type="ECO:0000256" key="2">
    <source>
        <dbReference type="SAM" id="MobiDB-lite"/>
    </source>
</evidence>
<evidence type="ECO:0000269" key="3">
    <source>
    </source>
</evidence>
<evidence type="ECO:0000269" key="4">
    <source>
    </source>
</evidence>
<evidence type="ECO:0000269" key="5">
    <source>
    </source>
</evidence>
<evidence type="ECO:0000269" key="6">
    <source>
    </source>
</evidence>
<evidence type="ECO:0000269" key="7">
    <source>
    </source>
</evidence>
<evidence type="ECO:0000269" key="8">
    <source>
    </source>
</evidence>
<evidence type="ECO:0000269" key="9">
    <source>
    </source>
</evidence>
<evidence type="ECO:0000269" key="10">
    <source>
    </source>
</evidence>
<evidence type="ECO:0000269" key="11">
    <source>
    </source>
</evidence>
<evidence type="ECO:0000269" key="12">
    <source>
    </source>
</evidence>
<evidence type="ECO:0000269" key="13">
    <source>
    </source>
</evidence>
<evidence type="ECO:0000269" key="14">
    <source>
    </source>
</evidence>
<evidence type="ECO:0000269" key="15">
    <source>
    </source>
</evidence>
<evidence type="ECO:0000269" key="16">
    <source>
    </source>
</evidence>
<evidence type="ECO:0000269" key="17">
    <source>
    </source>
</evidence>
<evidence type="ECO:0000269" key="18">
    <source>
    </source>
</evidence>
<evidence type="ECO:0000269" key="19">
    <source>
    </source>
</evidence>
<evidence type="ECO:0000269" key="20">
    <source>
    </source>
</evidence>
<evidence type="ECO:0000269" key="21">
    <source>
    </source>
</evidence>
<evidence type="ECO:0000269" key="22">
    <source>
    </source>
</evidence>
<evidence type="ECO:0000269" key="23">
    <source>
    </source>
</evidence>
<evidence type="ECO:0000269" key="24">
    <source>
    </source>
</evidence>
<evidence type="ECO:0000269" key="25">
    <source>
    </source>
</evidence>
<evidence type="ECO:0000269" key="26">
    <source>
    </source>
</evidence>
<evidence type="ECO:0000269" key="27">
    <source>
    </source>
</evidence>
<evidence type="ECO:0000269" key="28">
    <source>
    </source>
</evidence>
<evidence type="ECO:0000269" key="29">
    <source>
    </source>
</evidence>
<evidence type="ECO:0000269" key="30">
    <source>
    </source>
</evidence>
<evidence type="ECO:0000269" key="31">
    <source>
    </source>
</evidence>
<evidence type="ECO:0000269" key="32">
    <source>
    </source>
</evidence>
<evidence type="ECO:0000269" key="33">
    <source>
    </source>
</evidence>
<evidence type="ECO:0000269" key="34">
    <source>
    </source>
</evidence>
<evidence type="ECO:0000269" key="35">
    <source>
    </source>
</evidence>
<evidence type="ECO:0000269" key="36">
    <source>
    </source>
</evidence>
<evidence type="ECO:0000269" key="37">
    <source>
    </source>
</evidence>
<evidence type="ECO:0000269" key="38">
    <source>
    </source>
</evidence>
<evidence type="ECO:0000269" key="39">
    <source>
    </source>
</evidence>
<evidence type="ECO:0000269" key="40">
    <source>
    </source>
</evidence>
<evidence type="ECO:0000269" key="41">
    <source>
    </source>
</evidence>
<evidence type="ECO:0000269" key="42">
    <source>
    </source>
</evidence>
<evidence type="ECO:0000269" key="43">
    <source ref="28"/>
</evidence>
<evidence type="ECO:0000269" key="44">
    <source ref="30"/>
</evidence>
<evidence type="ECO:0000269" key="45">
    <source ref="31"/>
</evidence>
<evidence type="ECO:0000269" key="46">
    <source ref="5"/>
</evidence>
<evidence type="ECO:0000303" key="47">
    <source>
    </source>
</evidence>
<evidence type="ECO:0000303" key="48">
    <source>
    </source>
</evidence>
<evidence type="ECO:0000303" key="49">
    <source>
    </source>
</evidence>
<evidence type="ECO:0000303" key="50">
    <source>
    </source>
</evidence>
<evidence type="ECO:0000305" key="51"/>
<evidence type="ECO:0000305" key="52">
    <source>
    </source>
</evidence>
<evidence type="ECO:0000305" key="53">
    <source>
    </source>
</evidence>
<evidence type="ECO:0000305" key="54">
    <source>
    </source>
</evidence>
<evidence type="ECO:0007744" key="55">
    <source>
        <dbReference type="PDB" id="3THC"/>
    </source>
</evidence>
<evidence type="ECO:0007744" key="56">
    <source>
        <dbReference type="PDB" id="3THD"/>
    </source>
</evidence>
<evidence type="ECO:0007744" key="57">
    <source>
        <dbReference type="PDB" id="3WEZ"/>
    </source>
</evidence>
<evidence type="ECO:0007744" key="58">
    <source>
        <dbReference type="PDB" id="3WF0"/>
    </source>
</evidence>
<evidence type="ECO:0007744" key="59">
    <source>
        <dbReference type="PDB" id="3WF1"/>
    </source>
</evidence>
<evidence type="ECO:0007744" key="60">
    <source>
        <dbReference type="PDB" id="3WF2"/>
    </source>
</evidence>
<evidence type="ECO:0007744" key="61">
    <source>
        <dbReference type="PDB" id="3WF3"/>
    </source>
</evidence>
<evidence type="ECO:0007744" key="62">
    <source>
        <dbReference type="PDB" id="3WF4"/>
    </source>
</evidence>
<evidence type="ECO:0007829" key="63">
    <source>
        <dbReference type="PDB" id="3THD"/>
    </source>
</evidence>
<evidence type="ECO:0007829" key="64">
    <source>
        <dbReference type="PDB" id="3WF0"/>
    </source>
</evidence>
<keyword id="KW-0002">3D-structure</keyword>
<keyword id="KW-0025">Alternative splicing</keyword>
<keyword id="KW-0963">Cytoplasm</keyword>
<keyword id="KW-0903">Direct protein sequencing</keyword>
<keyword id="KW-0225">Disease variant</keyword>
<keyword id="KW-1015">Disulfide bond</keyword>
<keyword id="KW-0331">Gangliosidosis</keyword>
<keyword id="KW-0325">Glycoprotein</keyword>
<keyword id="KW-0326">Glycosidase</keyword>
<keyword id="KW-0378">Hydrolase</keyword>
<keyword id="KW-0458">Lysosome</keyword>
<keyword id="KW-0510">Mucopolysaccharidosis</keyword>
<keyword id="KW-1267">Proteomics identification</keyword>
<keyword id="KW-1185">Reference proteome</keyword>
<keyword id="KW-0732">Signal</keyword>
<keyword id="KW-0865">Zymogen</keyword>
<reference key="1">
    <citation type="journal article" date="1988" name="Biochem. Biophys. Res. Commun.">
        <title>Cloning, sequencing, and expression of cDNA for human beta-galactosidase.</title>
        <authorList>
            <person name="Oshima A."/>
            <person name="Tsuji A."/>
            <person name="Nagao Y."/>
            <person name="Sakuraba H."/>
            <person name="Suzuki Y."/>
        </authorList>
    </citation>
    <scope>NUCLEOTIDE SEQUENCE [MRNA] (ISOFORM 1)</scope>
    <scope>CATALYTIC ACTIVITY</scope>
    <source>
        <tissue>Placenta</tissue>
    </source>
</reference>
<reference key="2">
    <citation type="journal article" date="1989" name="J. Biol. Chem.">
        <title>Alternative splicing of beta-galactosidase mRNA generates the classic lysosomal enzyme and a beta-galactosidase-related protein.</title>
        <authorList>
            <person name="Morreau H."/>
            <person name="Galjart N.J."/>
            <person name="Gillemans N."/>
            <person name="Willemsen R."/>
            <person name="van der Horst G.T.J."/>
            <person name="D'Azzo A."/>
        </authorList>
    </citation>
    <scope>NUCLEOTIDE SEQUENCE [MRNA] (ISOFORMS 1 AND 2)</scope>
    <scope>PROTEIN SEQUENCE OF 29-46; 287-299; 372-376 AND 443-457</scope>
    <scope>FUNCTION</scope>
    <scope>CATALYTIC ACTIVITY</scope>
    <scope>SUBCELLULAR LOCATION</scope>
    <scope>TISSUE SPECIFICITY</scope>
    <scope>VARIANT LEU-10</scope>
    <source>
        <tissue>Testis</tissue>
    </source>
</reference>
<reference key="3">
    <citation type="journal article" date="1990" name="DNA Cell Biol.">
        <title>Isolation, characterization, and mapping of a human acid beta-galactosidase cDNA.</title>
        <authorList>
            <person name="Yamamoto Y."/>
            <person name="Hake C.A."/>
            <person name="Martin B.M."/>
            <person name="Kretz K.A."/>
            <person name="Ahern-Rindell A.J."/>
            <person name="Naylor S.L."/>
            <person name="Mudd M."/>
            <person name="O'Brien J.S."/>
        </authorList>
    </citation>
    <scope>NUCLEOTIDE SEQUENCE [MRNA] (ISOFORM 1)</scope>
    <scope>PARTIAL PROTEIN SEQUENCE</scope>
    <scope>VARIANT LEU-10</scope>
</reference>
<reference key="4">
    <citation type="journal article" date="2004" name="Nat. Genet.">
        <title>Complete sequencing and characterization of 21,243 full-length human cDNAs.</title>
        <authorList>
            <person name="Ota T."/>
            <person name="Suzuki Y."/>
            <person name="Nishikawa T."/>
            <person name="Otsuki T."/>
            <person name="Sugiyama T."/>
            <person name="Irie R."/>
            <person name="Wakamatsu A."/>
            <person name="Hayashi K."/>
            <person name="Sato H."/>
            <person name="Nagai K."/>
            <person name="Kimura K."/>
            <person name="Makita H."/>
            <person name="Sekine M."/>
            <person name="Obayashi M."/>
            <person name="Nishi T."/>
            <person name="Shibahara T."/>
            <person name="Tanaka T."/>
            <person name="Ishii S."/>
            <person name="Yamamoto J."/>
            <person name="Saito K."/>
            <person name="Kawai Y."/>
            <person name="Isono Y."/>
            <person name="Nakamura Y."/>
            <person name="Nagahari K."/>
            <person name="Murakami K."/>
            <person name="Yasuda T."/>
            <person name="Iwayanagi T."/>
            <person name="Wagatsuma M."/>
            <person name="Shiratori A."/>
            <person name="Sudo H."/>
            <person name="Hosoiri T."/>
            <person name="Kaku Y."/>
            <person name="Kodaira H."/>
            <person name="Kondo H."/>
            <person name="Sugawara M."/>
            <person name="Takahashi M."/>
            <person name="Kanda K."/>
            <person name="Yokoi T."/>
            <person name="Furuya T."/>
            <person name="Kikkawa E."/>
            <person name="Omura Y."/>
            <person name="Abe K."/>
            <person name="Kamihara K."/>
            <person name="Katsuta N."/>
            <person name="Sato K."/>
            <person name="Tanikawa M."/>
            <person name="Yamazaki M."/>
            <person name="Ninomiya K."/>
            <person name="Ishibashi T."/>
            <person name="Yamashita H."/>
            <person name="Murakawa K."/>
            <person name="Fujimori K."/>
            <person name="Tanai H."/>
            <person name="Kimata M."/>
            <person name="Watanabe M."/>
            <person name="Hiraoka S."/>
            <person name="Chiba Y."/>
            <person name="Ishida S."/>
            <person name="Ono Y."/>
            <person name="Takiguchi S."/>
            <person name="Watanabe S."/>
            <person name="Yosida M."/>
            <person name="Hotuta T."/>
            <person name="Kusano J."/>
            <person name="Kanehori K."/>
            <person name="Takahashi-Fujii A."/>
            <person name="Hara H."/>
            <person name="Tanase T.-O."/>
            <person name="Nomura Y."/>
            <person name="Togiya S."/>
            <person name="Komai F."/>
            <person name="Hara R."/>
            <person name="Takeuchi K."/>
            <person name="Arita M."/>
            <person name="Imose N."/>
            <person name="Musashino K."/>
            <person name="Yuuki H."/>
            <person name="Oshima A."/>
            <person name="Sasaki N."/>
            <person name="Aotsuka S."/>
            <person name="Yoshikawa Y."/>
            <person name="Matsunawa H."/>
            <person name="Ichihara T."/>
            <person name="Shiohata N."/>
            <person name="Sano S."/>
            <person name="Moriya S."/>
            <person name="Momiyama H."/>
            <person name="Satoh N."/>
            <person name="Takami S."/>
            <person name="Terashima Y."/>
            <person name="Suzuki O."/>
            <person name="Nakagawa S."/>
            <person name="Senoh A."/>
            <person name="Mizoguchi H."/>
            <person name="Goto Y."/>
            <person name="Shimizu F."/>
            <person name="Wakebe H."/>
            <person name="Hishigaki H."/>
            <person name="Watanabe T."/>
            <person name="Sugiyama A."/>
            <person name="Takemoto M."/>
            <person name="Kawakami B."/>
            <person name="Yamazaki M."/>
            <person name="Watanabe K."/>
            <person name="Kumagai A."/>
            <person name="Itakura S."/>
            <person name="Fukuzumi Y."/>
            <person name="Fujimori Y."/>
            <person name="Komiyama M."/>
            <person name="Tashiro H."/>
            <person name="Tanigami A."/>
            <person name="Fujiwara T."/>
            <person name="Ono T."/>
            <person name="Yamada K."/>
            <person name="Fujii Y."/>
            <person name="Ozaki K."/>
            <person name="Hirao M."/>
            <person name="Ohmori Y."/>
            <person name="Kawabata A."/>
            <person name="Hikiji T."/>
            <person name="Kobatake N."/>
            <person name="Inagaki H."/>
            <person name="Ikema Y."/>
            <person name="Okamoto S."/>
            <person name="Okitani R."/>
            <person name="Kawakami T."/>
            <person name="Noguchi S."/>
            <person name="Itoh T."/>
            <person name="Shigeta K."/>
            <person name="Senba T."/>
            <person name="Matsumura K."/>
            <person name="Nakajima Y."/>
            <person name="Mizuno T."/>
            <person name="Morinaga M."/>
            <person name="Sasaki M."/>
            <person name="Togashi T."/>
            <person name="Oyama M."/>
            <person name="Hata H."/>
            <person name="Watanabe M."/>
            <person name="Komatsu T."/>
            <person name="Mizushima-Sugano J."/>
            <person name="Satoh T."/>
            <person name="Shirai Y."/>
            <person name="Takahashi Y."/>
            <person name="Nakagawa K."/>
            <person name="Okumura K."/>
            <person name="Nagase T."/>
            <person name="Nomura N."/>
            <person name="Kikuchi H."/>
            <person name="Masuho Y."/>
            <person name="Yamashita R."/>
            <person name="Nakai K."/>
            <person name="Yada T."/>
            <person name="Nakamura Y."/>
            <person name="Ohara O."/>
            <person name="Isogai T."/>
            <person name="Sugano S."/>
        </authorList>
    </citation>
    <scope>NUCLEOTIDE SEQUENCE [LARGE SCALE MRNA] (ISOFORMS 1 AND 3)</scope>
    <scope>VARIANT LEU-10</scope>
</reference>
<reference key="5">
    <citation type="submission" date="2004-10" db="EMBL/GenBank/DDBJ databases">
        <title>Cloning of human full-length CDSs in BD Creator(TM) system donor vector.</title>
        <authorList>
            <person name="Kalnine N."/>
            <person name="Chen X."/>
            <person name="Rolfs A."/>
            <person name="Halleck A."/>
            <person name="Hines L."/>
            <person name="Eisenstein S."/>
            <person name="Koundinya M."/>
            <person name="Raphael J."/>
            <person name="Moreira D."/>
            <person name="Kelley T."/>
            <person name="LaBaer J."/>
            <person name="Lin Y."/>
            <person name="Phelan M."/>
            <person name="Farmer A."/>
        </authorList>
    </citation>
    <scope>NUCLEOTIDE SEQUENCE [LARGE SCALE MRNA] (ISOFORM 1)</scope>
    <scope>VARIANT LEU-10</scope>
</reference>
<reference key="6">
    <citation type="journal article" date="2006" name="Nature">
        <title>The DNA sequence, annotation and analysis of human chromosome 3.</title>
        <authorList>
            <person name="Muzny D.M."/>
            <person name="Scherer S.E."/>
            <person name="Kaul R."/>
            <person name="Wang J."/>
            <person name="Yu J."/>
            <person name="Sudbrak R."/>
            <person name="Buhay C.J."/>
            <person name="Chen R."/>
            <person name="Cree A."/>
            <person name="Ding Y."/>
            <person name="Dugan-Rocha S."/>
            <person name="Gill R."/>
            <person name="Gunaratne P."/>
            <person name="Harris R.A."/>
            <person name="Hawes A.C."/>
            <person name="Hernandez J."/>
            <person name="Hodgson A.V."/>
            <person name="Hume J."/>
            <person name="Jackson A."/>
            <person name="Khan Z.M."/>
            <person name="Kovar-Smith C."/>
            <person name="Lewis L.R."/>
            <person name="Lozado R.J."/>
            <person name="Metzker M.L."/>
            <person name="Milosavljevic A."/>
            <person name="Miner G.R."/>
            <person name="Morgan M.B."/>
            <person name="Nazareth L.V."/>
            <person name="Scott G."/>
            <person name="Sodergren E."/>
            <person name="Song X.-Z."/>
            <person name="Steffen D."/>
            <person name="Wei S."/>
            <person name="Wheeler D.A."/>
            <person name="Wright M.W."/>
            <person name="Worley K.C."/>
            <person name="Yuan Y."/>
            <person name="Zhang Z."/>
            <person name="Adams C.Q."/>
            <person name="Ansari-Lari M.A."/>
            <person name="Ayele M."/>
            <person name="Brown M.J."/>
            <person name="Chen G."/>
            <person name="Chen Z."/>
            <person name="Clendenning J."/>
            <person name="Clerc-Blankenburg K.P."/>
            <person name="Chen R."/>
            <person name="Chen Z."/>
            <person name="Davis C."/>
            <person name="Delgado O."/>
            <person name="Dinh H.H."/>
            <person name="Dong W."/>
            <person name="Draper H."/>
            <person name="Ernst S."/>
            <person name="Fu G."/>
            <person name="Gonzalez-Garay M.L."/>
            <person name="Garcia D.K."/>
            <person name="Gillett W."/>
            <person name="Gu J."/>
            <person name="Hao B."/>
            <person name="Haugen E."/>
            <person name="Havlak P."/>
            <person name="He X."/>
            <person name="Hennig S."/>
            <person name="Hu S."/>
            <person name="Huang W."/>
            <person name="Jackson L.R."/>
            <person name="Jacob L.S."/>
            <person name="Kelly S.H."/>
            <person name="Kube M."/>
            <person name="Levy R."/>
            <person name="Li Z."/>
            <person name="Liu B."/>
            <person name="Liu J."/>
            <person name="Liu W."/>
            <person name="Lu J."/>
            <person name="Maheshwari M."/>
            <person name="Nguyen B.-V."/>
            <person name="Okwuonu G.O."/>
            <person name="Palmeiri A."/>
            <person name="Pasternak S."/>
            <person name="Perez L.M."/>
            <person name="Phelps K.A."/>
            <person name="Plopper F.J."/>
            <person name="Qiang B."/>
            <person name="Raymond C."/>
            <person name="Rodriguez R."/>
            <person name="Saenphimmachak C."/>
            <person name="Santibanez J."/>
            <person name="Shen H."/>
            <person name="Shen Y."/>
            <person name="Subramanian S."/>
            <person name="Tabor P.E."/>
            <person name="Verduzco D."/>
            <person name="Waldron L."/>
            <person name="Wang J."/>
            <person name="Wang J."/>
            <person name="Wang Q."/>
            <person name="Williams G.A."/>
            <person name="Wong G.K.-S."/>
            <person name="Yao Z."/>
            <person name="Zhang J."/>
            <person name="Zhang X."/>
            <person name="Zhao G."/>
            <person name="Zhou J."/>
            <person name="Zhou Y."/>
            <person name="Nelson D."/>
            <person name="Lehrach H."/>
            <person name="Reinhardt R."/>
            <person name="Naylor S.L."/>
            <person name="Yang H."/>
            <person name="Olson M."/>
            <person name="Weinstock G."/>
            <person name="Gibbs R.A."/>
        </authorList>
    </citation>
    <scope>NUCLEOTIDE SEQUENCE [LARGE SCALE GENOMIC DNA]</scope>
    <scope>VARIANT CYS-521</scope>
</reference>
<reference key="7">
    <citation type="journal article" date="2004" name="Genome Res.">
        <title>The status, quality, and expansion of the NIH full-length cDNA project: the Mammalian Gene Collection (MGC).</title>
        <authorList>
            <consortium name="The MGC Project Team"/>
        </authorList>
    </citation>
    <scope>NUCLEOTIDE SEQUENCE [LARGE SCALE MRNA] (ISOFORM 1)</scope>
    <scope>VARIANT LEU-10</scope>
    <source>
        <tissue>Colon</tissue>
    </source>
</reference>
<reference key="8">
    <citation type="journal article" date="1986" name="Eur. J. Cell Biol.">
        <title>Immunoelectron microscopical localization of lysosomal beta-galactosidase and its precursor forms in normal and mutant human fibroblasts.</title>
        <authorList>
            <person name="Willemsen R."/>
            <person name="Hoogeveen A.T."/>
            <person name="Sips H.J."/>
            <person name="van Dongen J.M."/>
            <person name="Galjaard H."/>
        </authorList>
    </citation>
    <scope>SUBCELLULAR LOCATION</scope>
    <scope>SUBUNIT</scope>
</reference>
<reference key="9">
    <citation type="journal article" date="1993" name="J. Clin. Invest.">
        <title>The 67-kD elastin/laminin-binding protein is related to an enzymatically inactive, alternatively spliced form of beta-galactosidase.</title>
        <authorList>
            <person name="Hinek A."/>
            <person name="Rabinovitch M."/>
            <person name="Keeley F."/>
            <person name="Okamura-Oho Y."/>
            <person name="Callahan J."/>
        </authorList>
    </citation>
    <scope>DOMAIN ELASTIN/LAMININ BINDING</scope>
    <scope>TISSUE SPECIFICITY</scope>
</reference>
<reference key="10">
    <citation type="journal article" date="1994" name="Eur. J. Biochem.">
        <title>Hydrolysis of lactosylceramide by human galactosylceramidase and GM1-beta-galactosidase in a detergent-free system and its stimulation by sphingolipid activator proteins, sap-B and sap-C. Activator proteins stimulate lactosylceramide hydrolysis.</title>
        <authorList>
            <person name="Zschoche A."/>
            <person name="Fuerst W."/>
            <person name="Schwarzmann G."/>
            <person name="Sanhoff K."/>
        </authorList>
    </citation>
    <scope>FUNCTION</scope>
    <scope>CATALYTIC ACTIVITY</scope>
</reference>
<reference key="11">
    <citation type="journal article" date="1996" name="Biol. Chem.">
        <title>Biological roles of the non-integrin elastin/laminin receptor.</title>
        <authorList>
            <person name="Hinek A."/>
        </authorList>
    </citation>
    <scope>FUNCTION (ISOFORM 2)</scope>
</reference>
<reference key="12">
    <citation type="journal article" date="1998" name="J. Biol. Chem.">
        <title>The 67-kDa enzymatically inactive alternatively spliced variant of beta-galactosidase is identical to the elastin/laminin-binding protein.</title>
        <authorList>
            <person name="Privitera S."/>
            <person name="Prody C.A."/>
            <person name="Callahan J.W."/>
            <person name="Hinek A."/>
        </authorList>
    </citation>
    <scope>IDENTITY OF BETA-GALACTOSIDASE-RELATED PROTEIN WITH EBP</scope>
</reference>
<reference key="13">
    <citation type="journal article" date="1999" name="Biochim. Biophys. Acta">
        <title>Molecular basis of GM1 gangliosidosis and Morquio disease, type B. Structure-function studies of lysosomal beta-galactosidase and the non-lysosomal beta-galactosidase-like protein.</title>
        <authorList>
            <person name="Callahan J.W."/>
        </authorList>
    </citation>
    <scope>REVIEW</scope>
</reference>
<reference key="14">
    <citation type="journal article" date="2000" name="Am. J. Hum. Genet.">
        <title>Impaired elastic-fiber assembly by fibroblasts from patients with either Morquio B disease or infantile GM1-gangliosidosis is linked to deficiency in the 67-kD spliced variant of beta-galactosidase.</title>
        <authorList>
            <person name="Hinek A."/>
            <person name="Zhang S."/>
            <person name="Smith A.C."/>
            <person name="Callahan J.W."/>
        </authorList>
    </citation>
    <scope>ELASTIC-FIBER ASSEMBLY STUDIES</scope>
    <scope>FUNCTION (ISOFORM 2)</scope>
</reference>
<reference key="15">
    <citation type="journal article" date="2006" name="Mol. Cell. Proteomics">
        <title>Elucidation of N-glycosylation sites on human platelet proteins: a glycoproteomic approach.</title>
        <authorList>
            <person name="Lewandrowski U."/>
            <person name="Moebius J."/>
            <person name="Walter U."/>
            <person name="Sickmann A."/>
        </authorList>
    </citation>
    <scope>GLYCOSYLATION [LARGE SCALE ANALYSIS] AT ASN-464</scope>
    <source>
        <tissue>Platelet</tissue>
    </source>
</reference>
<reference key="16">
    <citation type="journal article" date="2009" name="J. Proteome Res.">
        <title>Glycoproteomics analysis of human liver tissue by combination of multiple enzyme digestion and hydrazide chemistry.</title>
        <authorList>
            <person name="Chen R."/>
            <person name="Jiang X."/>
            <person name="Sun D."/>
            <person name="Han G."/>
            <person name="Wang F."/>
            <person name="Ye M."/>
            <person name="Wang L."/>
            <person name="Zou H."/>
        </authorList>
    </citation>
    <scope>GLYCOSYLATION [LARGE SCALE ANALYSIS] AT ASN-464 AND ASN-555</scope>
    <source>
        <tissue>Liver</tissue>
    </source>
</reference>
<reference key="17">
    <citation type="journal article" date="2011" name="BMC Syst. Biol.">
        <title>Initial characterization of the human central proteome.</title>
        <authorList>
            <person name="Burkard T.R."/>
            <person name="Planyavsky M."/>
            <person name="Kaupe I."/>
            <person name="Breitwieser F.P."/>
            <person name="Buerckstuemmer T."/>
            <person name="Bennett K.L."/>
            <person name="Superti-Furga G."/>
            <person name="Colinge J."/>
        </authorList>
    </citation>
    <scope>IDENTIFICATION BY MASS SPECTROMETRY [LARGE SCALE ANALYSIS]</scope>
</reference>
<reference key="18">
    <citation type="journal article" date="2014" name="J. Proteomics">
        <title>An enzyme assisted RP-RPLC approach for in-depth analysis of human liver phosphoproteome.</title>
        <authorList>
            <person name="Bian Y."/>
            <person name="Song C."/>
            <person name="Cheng K."/>
            <person name="Dong M."/>
            <person name="Wang F."/>
            <person name="Huang J."/>
            <person name="Sun D."/>
            <person name="Wang L."/>
            <person name="Ye M."/>
            <person name="Zou H."/>
        </authorList>
    </citation>
    <scope>IDENTIFICATION BY MASS SPECTROMETRY [LARGE SCALE ANALYSIS]</scope>
    <source>
        <tissue>Liver</tissue>
    </source>
</reference>
<reference key="19">
    <citation type="journal article" date="2015" name="Proteomics">
        <title>N-terminome analysis of the human mitochondrial proteome.</title>
        <authorList>
            <person name="Vaca Jacome A.S."/>
            <person name="Rabilloud T."/>
            <person name="Schaeffer-Reiss C."/>
            <person name="Rompais M."/>
            <person name="Ayoub D."/>
            <person name="Lane L."/>
            <person name="Bairoch A."/>
            <person name="Van Dorsselaer A."/>
            <person name="Carapito C."/>
        </authorList>
    </citation>
    <scope>IDENTIFICATION BY MASS SPECTROMETRY [LARGE SCALE ANALYSIS]</scope>
</reference>
<reference evidence="55 56" key="20">
    <citation type="journal article" date="2012" name="J. Biol. Chem.">
        <title>Crystal structure of human beta-galactosidase: structural basis of Gm1 gangliosidosis and morquio B diseases.</title>
        <authorList>
            <person name="Ohto U."/>
            <person name="Usui K."/>
            <person name="Ochi T."/>
            <person name="Yuki K."/>
            <person name="Satow Y."/>
            <person name="Shimizu T."/>
        </authorList>
    </citation>
    <scope>X-RAY CRYSTALLOGRAPHY (1.79 ANGSTROMS) OF 24-677 IN COMPLEX WITH GALACTOSE</scope>
    <scope>SUBUNIT</scope>
    <scope>ACTIVE SITE</scope>
    <scope>GLYCOSYLATION AT ASN-247; ASN-464; ASN-498 AND ASN-555</scope>
    <scope>DISULFIDE BONDS</scope>
</reference>
<reference evidence="57 58 59 60 61 62" key="21">
    <citation type="journal article" date="2014" name="J. Biol. Chem.">
        <title>Structural basis of pharmacological chaperoning for human beta-galactosidase.</title>
        <authorList>
            <person name="Suzuki H."/>
            <person name="Ohto U."/>
            <person name="Higaki K."/>
            <person name="Mena-Barragan T."/>
            <person name="Aguilar-Moncayo M."/>
            <person name="Ortiz Mellet C."/>
            <person name="Nanba E."/>
            <person name="Garcia Fernandez J.M."/>
            <person name="Suzuki Y."/>
            <person name="Shimizu T."/>
        </authorList>
    </citation>
    <scope>X-RAY CRYSTALLOGRAPHY (2.00 ANGSTROMS) OF 24-677 IN COMPLEX WITH GALACTOSE</scope>
    <scope>CATALYTIC ACTIVITY</scope>
    <scope>GLYCOSYLATION AT ASN-247; ASN-464; ASN-498 AND ASN-555</scope>
    <scope>DISULFIDE BONDS</scope>
    <scope>BIOPHYSICOCHEMICAL PROPERTIES</scope>
    <scope>CHARACTERIZATION OF VARIANT GM1G3 THR-51</scope>
    <scope>CHARACTERIZATION OF VARIANT GM1G1 AND GM1G2 CYS-201</scope>
</reference>
<reference key="22">
    <citation type="journal article" date="1991" name="Am. J. Hum. Genet.">
        <title>Human beta-galactosidase gene mutations in morquio B disease.</title>
        <authorList>
            <person name="Oshima A."/>
            <person name="Yoshida K."/>
            <person name="Shimmoto M."/>
            <person name="Fukuhara Y."/>
            <person name="Sakuraba H."/>
            <person name="Suzuki Y."/>
        </authorList>
    </citation>
    <scope>VARIANTS MPS4B LEU-273; HIS-482 AND CYS-509</scope>
    <scope>VARIANT GM1G1 CYS-494</scope>
</reference>
<reference key="23">
    <citation type="journal article" date="1991" name="Am. J. Hum. Genet.">
        <title>GM1-gangliosidosis (genetic beta-galactosidase deficiency): identification of four mutations in different clinical phenotypes among Japanese patients.</title>
        <authorList>
            <person name="Nishimoto J."/>
            <person name="Nanba E."/>
            <person name="Inui K."/>
            <person name="Okada S."/>
            <person name="Suzuki K."/>
        </authorList>
    </citation>
    <scope>VARIANT GM1G1 CYS-49</scope>
    <scope>VARIANT GM1G3 THR-51</scope>
    <scope>VARIANT GM1G2 CYS-201</scope>
</reference>
<reference key="24">
    <citation type="journal article" date="1991" name="Am. J. Hum. Genet.">
        <title>Human beta-galactosidase gene mutations in GM1-gangliosidosis: a common mutation among Japanese adult/chronic cases.</title>
        <authorList>
            <person name="Yoshida K."/>
            <person name="Oshima A."/>
            <person name="Shimmoto M."/>
            <person name="Fukuhara Y."/>
            <person name="Sakuraba H."/>
            <person name="Yanagisawa N."/>
            <person name="Suzuki Y."/>
        </authorList>
    </citation>
    <scope>VARIANTS GM1G3 THR-51 AND GLN-457</scope>
    <scope>VARIANTS GM1G1 ARG-123 AND CYS-316</scope>
    <scope>VARIANT GM1G2 CYS-201</scope>
</reference>
<reference key="25">
    <citation type="journal article" date="1992" name="Hum. Genet.">
        <title>A homozygous missense arginine to histidine substitution at position 482 of the beta-galactosidase in an Italian infantile GM1-gangliosidosis patient.</title>
        <authorList>
            <person name="Mosna G."/>
            <person name="Fattore S."/>
            <person name="Tubiello G."/>
            <person name="Brocca S."/>
            <person name="Trubia M."/>
            <person name="Gianazza E."/>
            <person name="Gatti R."/>
            <person name="Danesino C."/>
            <person name="Minelli A."/>
            <person name="Piantanida M."/>
        </authorList>
    </citation>
    <scope>VARIANT GM1G1 HIS-482</scope>
</reference>
<reference key="26">
    <citation type="journal article" date="1993" name="Am. J. Hum. Genet.">
        <title>Mutations in acid beta-galactosidase cause GM1-gangliosidosis in American patients.</title>
        <authorList>
            <person name="Boustany R.-M.N."/>
            <person name="Qian W.-H."/>
            <person name="Suzuki K."/>
        </authorList>
    </citation>
    <scope>VARIANTS GM1G1 CYS-208 AND ARG-578</scope>
    <scope>VARIANTS GM1G2 HIS-590 AND GLY-632</scope>
</reference>
<reference key="27">
    <citation type="journal article" date="1994" name="Am. J. Hum. Genet.">
        <title>Mutations in the lysosomal beta-galactosidase gene that cause the adult form of GM1 gangliosidosis.</title>
        <authorList>
            <person name="Chakraborty S."/>
            <person name="Rafi M.A."/>
            <person name="Wenger D.A."/>
        </authorList>
    </citation>
    <scope>VARIANT GM1G3 MET-82</scope>
</reference>
<reference key="28">
    <citation type="journal article" date="1994" name="Am. J. Hum. Genet.">
        <title>Novel missense mutations in beta-galactosidase that result in GM1-gangliosidosis.</title>
        <authorList>
            <person name="Hilson W.L."/>
            <person name="Okamura-Oho Y."/>
            <person name="Zhang S."/>
            <person name="Clarke J.T.R."/>
            <person name="Mahuran D."/>
            <person name="Callahan J.W."/>
        </authorList>
    </citation>
    <scope>VARIANTS GM1G1 SER-148 AND ALA-216</scope>
    <scope>VARIANT GM1G3 TYR-214</scope>
    <scope>VARIANT GLY-532</scope>
</reference>
<reference key="29">
    <citation type="journal article" date="1995" name="Clin. Genet.">
        <title>Clinical and molecular analysis of a Japanese boy with Morquio B disease.</title>
        <authorList>
            <person name="Ishii N."/>
            <person name="Oohira T."/>
            <person name="Oshima A."/>
            <person name="Sakuraba H."/>
            <person name="Endo F."/>
            <person name="Matsuda I."/>
            <person name="Sukegawa K."/>
            <person name="Orii T."/>
            <person name="Suzuki Y."/>
        </authorList>
    </citation>
    <scope>VARIANTS MPS4B HIS-83 AND CYS-482</scope>
</reference>
<reference key="30">
    <citation type="book" date="1995" name="The metabolic and molecular bases of inherited disease">
        <title>Beta-galactosidase deficiency (beta-galactosidosis): GM1 gangliosidosis and Morquio B disease.</title>
        <editorList>
            <person name="Scriver C.R."/>
            <person name="Beaudet A.L."/>
            <person name="Sly W.S."/>
            <person name="Valle D."/>
        </editorList>
        <authorList>
            <person name="Suzuki Y."/>
            <person name="Sakuraba H."/>
            <person name="Oshima A."/>
        </authorList>
    </citation>
    <scope>VARIANT GM1G3 SER-263</scope>
</reference>
<reference key="31">
    <citation type="journal article" date="1997" name="Am. J. Hum. Genet.">
        <title>Identification of new mutations in six Italian patients affected by a variant form of infantile GM1-gangliosidosis with severe cardiomyopathy.</title>
        <authorList>
            <person name="Morrone A."/>
            <person name="Bardelli T."/>
            <person name="Donati M.A."/>
            <person name="Giorgi M."/>
            <person name="Di Rocco R."/>
            <person name="Gatti R."/>
            <person name="Taddeucci G."/>
            <person name="Ricci R."/>
            <person name="D'Azzo A."/>
            <person name="Zammarchi E."/>
        </authorList>
    </citation>
    <scope>VARIANTS GM1G1 HIS-59; ASN-591 AND CYS-591</scope>
</reference>
<reference key="32">
    <citation type="journal article" date="1997" name="J. Child Neurol.">
        <title>Beta-Galactosidase gene mutations in patients with slowly progressive GM1 gangliosidosis.</title>
        <authorList>
            <person name="Kaye E.M."/>
            <person name="Shalish C."/>
            <person name="Livermore J."/>
            <person name="Taylor H.A."/>
            <person name="Stevenson R.E."/>
            <person name="Breakefield X.O."/>
        </authorList>
    </citation>
    <scope>VARIANTS SLOWLY PROGRESSIVE GM1-GANGLIOSIDOSIS HIS-201; SER-266 AND CYS-509</scope>
</reference>
<reference key="33">
    <citation type="journal article" date="2002" name="Biochim. Biophys. Acta">
        <title>Novel mutations (Asn 484 Lys, Thr 500 Ala, Gly 438 Glu) in Morquio B disease.</title>
        <authorList>
            <person name="Bagshaw R.D."/>
            <person name="Zhang S."/>
            <person name="Hinek A."/>
            <person name="Skomorowski M.-A."/>
            <person name="Whelan D."/>
            <person name="Clarke J.T.R."/>
            <person name="Callahan J.W."/>
        </authorList>
    </citation>
    <scope>VARIANTS MPS4B GLU-438; LYS-484 AND ALA-500</scope>
</reference>
<reference key="34">
    <citation type="journal article" date="1999" name="Hum. Mutat.">
        <title>Six novel beta-galactosidase gene mutations in Brazilian patients with GM1-gangliosidosis.</title>
        <authorList>
            <person name="Silva C.M.D."/>
            <person name="Severini M.H."/>
            <person name="Sopelsa A."/>
            <person name="Coelho J.C."/>
            <person name="Zaha A."/>
            <person name="d'Azzo A."/>
            <person name="Giugliani R."/>
        </authorList>
    </citation>
    <scope>VARIANTS GM1G1 HIS-59; SER-121; CYS-208; MET-240 AND ASN-491</scope>
    <scope>VARIANTS LEU-10; CYS-521 AND GLY-532</scope>
</reference>
<reference key="35">
    <citation type="journal article" date="2000" name="Biochem. J.">
        <title>Characterization of beta-galactosidase mutations Asp332--&gt;Asn and Arg148--&gt;Ser, and a polymorphism, Ser532--&gt;Gly, in a case of GM1 gangliosidosis.</title>
        <authorList>
            <person name="Zhang S."/>
            <person name="Bagshaw R."/>
            <person name="Hilson W."/>
            <person name="Oho Y."/>
            <person name="Hinek A."/>
            <person name="Clarke J.T.R."/>
            <person name="Hinek A."/>
            <person name="Callahan J.W."/>
        </authorList>
    </citation>
    <scope>VARIANTS GM1G1 SER-148 AND ASN-332</scope>
    <scope>VARIANT GLY-532</scope>
    <scope>CHARACTERIZATION OF VARIANT GLY-532</scope>
</reference>
<reference key="36">
    <citation type="journal article" date="2000" name="Hum. Mutat.">
        <title>Beta-galactosidase gene mutations affecting the lysosomal enzyme and the elastin-binding protein in GM1-gangliosidosis patients with cardiac involvement.</title>
        <authorList>
            <person name="Morrone A."/>
            <person name="Bardelli T."/>
            <person name="Donati M.A."/>
            <person name="Giorgi M."/>
            <person name="Di Rocco M."/>
            <person name="Gatti R."/>
            <person name="Parini R."/>
            <person name="Ricci R."/>
            <person name="Taddeucci G."/>
            <person name="D'Azzo A."/>
            <person name="Zammarchi E."/>
        </authorList>
    </citation>
    <scope>VARIANTS GM1G1 HIS-59; HIS-482; ASN-591 AND CYS-591</scope>
    <scope>VARIANTS GM1G2 HIS-201 AND ASP-579</scope>
</reference>
<reference key="37">
    <citation type="journal article" date="2001" name="Hum. Genet.">
        <title>Mutation analyses in 17 patients with deficiency in acid beta-galactosidase: three novel point mutations and high correlation of mutation W273L with Morquio disease type B.</title>
        <authorList>
            <person name="Paschke E."/>
            <person name="Milos I."/>
            <person name="Kreimer-Erlacher H."/>
            <person name="Hoefler G."/>
            <person name="Beck M."/>
            <person name="Hoeltzenbein M."/>
            <person name="Kleijer W."/>
            <person name="Levade T."/>
            <person name="Michelakakis H."/>
            <person name="Radeva B."/>
        </authorList>
    </citation>
    <scope>VARIANTS MPS4B LEU-273; PRO-408 AND ALA-500</scope>
    <scope>VARIANTS GM1G3 MET-82; ASP-270 AND TYR-281</scope>
    <scope>VARIANT LEU-10</scope>
</reference>
<reference key="38">
    <citation type="journal article" date="2003" name="Hum. Genet.">
        <title>Modulating action of the new polymorphism L436F detected in the GLB1 gene of a type-II GM1 gangliosidosis patient.</title>
        <authorList>
            <person name="Caciotti A."/>
            <person name="Bardelli T."/>
            <person name="Cunningham J."/>
            <person name="D'Azzo A."/>
            <person name="Zammarchi E."/>
            <person name="Morrone A."/>
        </authorList>
    </citation>
    <scope>VARIANTS GM1G2 TRP-68 AND CYS-201</scope>
    <scope>CHARACTERIZATION OF VARIANTS GM1G2 TRP-68 AND CYS-201</scope>
    <scope>VARIANT PHE-436</scope>
    <scope>MODULATING ACTION OF VARIANT PHE-436</scope>
</reference>
<reference key="39">
    <citation type="journal article" date="2004" name="Hum. Mutat.">
        <title>Four novel mutations in patients from the Middle East with the infantile form of GM1-gangliosidosis.</title>
        <authorList>
            <person name="Georgiou T."/>
            <person name="Drousiotou A."/>
            <person name="Campos Y."/>
            <person name="Caciotti A."/>
            <person name="Sztriha L."/>
            <person name="Gururaj A."/>
            <person name="Ozand P."/>
            <person name="Zammarchi E."/>
            <person name="Morrone A."/>
            <person name="D'Azzo A."/>
        </authorList>
    </citation>
    <scope>VARIANT GM1G1 TYR-151</scope>
    <scope>CHARACTERIZATION OF VARIANT GM1G1 TYR-151</scope>
</reference>
<reference key="40">
    <citation type="journal article" date="2004" name="Hum. Mutat.">
        <authorList>
            <person name="Georgiou T."/>
            <person name="Drousiotou A."/>
            <person name="Campos Y."/>
            <person name="Caciotti A."/>
            <person name="Sztriha L."/>
            <person name="Gururaj A."/>
            <person name="Ozand P."/>
            <person name="Zammarchi E."/>
            <person name="Morrone A."/>
            <person name="D'Azzo A."/>
        </authorList>
    </citation>
    <scope>ERRATUM OF PUBMED:15365997</scope>
</reference>
<reference key="41">
    <citation type="journal article" date="2005" name="Hum. Mutat.">
        <title>Role of beta-galactosidase and elastin binding protein in lysosomal and nonlysosomal complexes of patients with GM1-gangliosidosis.</title>
        <authorList>
            <person name="Caciotti A."/>
            <person name="Donati M.A."/>
            <person name="Boneh A."/>
            <person name="d'Azzo A."/>
            <person name="Federico A."/>
            <person name="Parini R."/>
            <person name="Antuzzi D."/>
            <person name="Bardelli T."/>
            <person name="Nosi D."/>
            <person name="Kimonis V."/>
            <person name="Zammarchi E."/>
            <person name="Morrone A."/>
        </authorList>
    </citation>
    <scope>VARIANTS GM1G1 HIS-59; CYS-59; CYS-208; MET-239; TYR-281; HIS-482; ASP-579; ASN-591 AND CYS-591</scope>
    <scope>VARIANT GM1G2 HIS-201</scope>
    <scope>VARIANT CYS-521</scope>
    <scope>CHARACTERIZATION OF VARIANTS GM1G1 HIS-59; CYS-59; CYS-208; MET-239; TYR-281; HIS-482; ASP-579; ASN-591 AND CYS-591</scope>
    <scope>CHARACTERIZATION OF VARIANT GM1G2 HIS-201</scope>
    <scope>CHARACTERIZATION OF VARIANT CYS-521</scope>
    <scope>FUNCTION</scope>
    <scope>CATALYTIC ACTIVITY</scope>
</reference>
<reference key="42">
    <citation type="journal article" date="2005" name="J. Child Neurol.">
        <title>Magnetic resonance imaging findings and novel mutations in GM1 gangliosidosis.</title>
        <authorList>
            <person name="Gururaj A."/>
            <person name="Sztriha L."/>
            <person name="Hertecant J."/>
            <person name="Johansen J.G."/>
            <person name="Georgiou T."/>
            <person name="Campos Y."/>
            <person name="Drousiotou A."/>
            <person name="d'Azzo A."/>
        </authorList>
    </citation>
    <scope>VARIANT GM1G1 TYR-151</scope>
    <scope>VARIANT LEU-10</scope>
</reference>
<reference key="43">
    <citation type="journal article" date="2005" name="Mov. Disord.">
        <title>Dystonia and parkinsonism in GM1 type 3 gangliosidosis.</title>
        <authorList>
            <person name="Roze E."/>
            <person name="Paschke E."/>
            <person name="Lopez N."/>
            <person name="Eck T."/>
            <person name="Yoshida K."/>
            <person name="Maurel-Ollivier A."/>
            <person name="Doummar D."/>
            <person name="Caillaud C."/>
            <person name="Galanaud D."/>
            <person name="Billette de Villemeur T."/>
            <person name="Vidailhet M."/>
            <person name="Roubergue A."/>
        </authorList>
    </citation>
    <scope>VARIANTS GM1G3 HIS-49; GLU-73; CYS-148 AND GLU-438</scope>
</reference>
<reference key="44">
    <citation type="journal article" date="2006" name="Hum. Mutat.">
        <title>Twenty-one novel mutations in the GLB1 gene identified in a large group of GM1-gangliosidosis and Morquio B patients: possible common origin for the prevalent p.R59H mutation among Gypsies.</title>
        <authorList>
            <person name="Santamaria R."/>
            <person name="Chabas A."/>
            <person name="Coll M.J."/>
            <person name="Miranda C.S."/>
            <person name="Vilageliu L."/>
            <person name="Grinberg D."/>
        </authorList>
    </citation>
    <scope>VARIANTS GM1G1 CYS-59; HIS-59; SER-136; VAL-151; PRO-173; CYS-199; ASP-272; ASN-346; CYS-347; PRO-420; ARG-422; ASN-441 AND CYS-590</scope>
    <scope>VARIANT GM1G2 SER-264</scope>
    <scope>VARIANTS GM1G3 HIS-201 AND LYS-420</scope>
    <scope>VARIANTS MPS4B CYS-83; CYS-444; SER-494 AND ALA-500</scope>
    <scope>VARIANTS PHE-436; CYS-521 AND GLY-532</scope>
</reference>
<reference key="45">
    <citation type="journal article" date="2006" name="J. Med. Invest.">
        <title>Elastogenesis in cultured dermal fibroblasts from patients with lysosomal beta-galactosidase, protective protein/cathepsin A and neuraminidase-1 deficiencies.</title>
        <authorList>
            <person name="Tatano Y."/>
            <person name="Takeuchi N."/>
            <person name="Kuwahara J."/>
            <person name="Sakuraba H."/>
            <person name="Takahashi T."/>
            <person name="Takada G."/>
            <person name="Itoh K."/>
        </authorList>
    </citation>
    <scope>VARIANTS MPS4B LEU-273; HIS-482 AND CYS-509</scope>
    <scope>VARIANTS GM1G1 CYS-201; HIS-201 AND HIS-318</scope>
</reference>
<reference key="46">
    <citation type="journal article" date="2007" name="Clin. Genet.">
        <title>Identification of 14 novel GLB1 mutations, including five deletions, in 19 patients with GM1 gangliosidosis from South America.</title>
        <authorList>
            <person name="Santamaria R."/>
            <person name="Blanco M."/>
            <person name="Chabas A."/>
            <person name="Grinberg D."/>
            <person name="Vilageliu L."/>
        </authorList>
    </citation>
    <scope>VARIANTS GM1G1 CYS-59; HIS-59; VAL-134; LEU-147 DEL; SER-162; CYS-208; ASP-272; 377-VAL--LYS-381 DEL; TYR-491; LEU-549 AND CYS-590</scope>
    <scope>VARIANT GM1G2 HIS-201</scope>
    <scope>VARIANT GM1G3 ARG-155</scope>
    <scope>VARIANTS GM1-GANGLIOSIDOSIS LEU-434 AND GLU-554</scope>
</reference>
<reference key="47">
    <citation type="journal article" date="2007" name="Clin. Genet.">
        <title>Identification of a novel pseudodeficiency allele in the GLB1 gene in a carrier of GM1 gangliosidosis.</title>
        <authorList>
            <person name="Gort L."/>
            <person name="Santamaria R."/>
            <person name="Grinberg D."/>
            <person name="Vilageliu L."/>
            <person name="Chabas A."/>
        </authorList>
    </citation>
    <scope>VARIANT TRP-595</scope>
    <scope>CHARACTERIZATION OF VARIANT TRP-595</scope>
</reference>
<reference key="48">
    <citation type="journal article" date="2007" name="J. Lipid Res.">
        <title>Expression and characterization of 14 GLB1 mutant alleles found in GM1-gangliosidosis and Morquio B patients.</title>
        <authorList>
            <person name="Santamaria R."/>
            <person name="Chabas A."/>
            <person name="Callahan J.W."/>
            <person name="Grinberg D."/>
            <person name="Vilageliu L."/>
        </authorList>
    </citation>
    <scope>CHARACTERIZATION OF VARIANTS GM1G1 HIS-59; SER-162; PRO-173; HIS-201; PRO-420; ASN-441 AND CYS-590</scope>
    <scope>CHARACTERIZATION OF VARIANTS MPS4B CYS-83; CYS-444 AND SER-494</scope>
    <scope>CHARACTERIZATION OF VARIANT GM1G3 LYS-420</scope>
    <scope>CHARACTERIZATION OF VARIANTS CYS-521 AND GLY-532</scope>
</reference>
<reference key="49">
    <citation type="journal article" date="2009" name="Hum. Mutat.">
        <title>GM1 gangliosidosis and Morquio B disease: expression analysis of missense mutations affecting the catalytic site of acid beta-galactosidase.</title>
        <authorList>
            <person name="Hofer D."/>
            <person name="Paul K."/>
            <person name="Fantur K."/>
            <person name="Beck M."/>
            <person name="Buerger F."/>
            <person name="Caillaud C."/>
            <person name="Fumic K."/>
            <person name="Ledvinova J."/>
            <person name="Lugowska A."/>
            <person name="Michelakakis H."/>
            <person name="Radeva B."/>
            <person name="Ramaswami U."/>
            <person name="Plecko B."/>
            <person name="Paschke E."/>
        </authorList>
    </citation>
    <scope>VARIANTS GM1G1 HIS-59; THR-132; ARG-184; ASP-190; CYS-201; HIS-201; MET-239; HIS-255; ILE-329; GLU-332; ASN-346; GLN-442 AND SER-597</scope>
    <scope>VARIANTS GM1G2 GLN-68; ARG-155 AND HIS-333</scope>
    <scope>VARIANTS GM1G3 MET-82; ASP-270 AND GLU-438</scope>
    <scope>VARIANTS MPS4B PHE-149; TYR-198; LEU-273; ALA-397; PRO-408 AND ALA-500</scope>
    <scope>CHARACTERIZATION OF VARIANTS GM1G1 THR-132; ARG-184; ASP-190; CYS-201; HIS-201; HIS-255; ILE-329; GLU-332 AND SER-597</scope>
    <scope>CHARACTERIZATION OF VARIANTS GM1G2 GLN-68; ARG-155 AND HIS-333</scope>
    <scope>CHARACTERIZATION OF VARIANTS GM1G3 ASP-270 AND GLU-438</scope>
    <scope>CHARACTERIZATION OF VARIANTS MPS4B PHE-149; TYR-198; LEU-273; ALA-397; PRO-408 AND ALA-500</scope>
    <scope>CATALYTIC ACTIVITY</scope>
    <scope>FUNCTION</scope>
</reference>
<reference key="50">
    <citation type="journal article" date="2015" name="Gene">
        <title>Recurrent and novel GLB1 mutations in India.</title>
        <authorList>
            <person name="Bidchol A.M."/>
            <person name="Dalal A."/>
            <person name="Trivedi R."/>
            <person name="Shukla A."/>
            <person name="Nampoothiri S."/>
            <person name="Sankar V.H."/>
            <person name="Danda S."/>
            <person name="Gupta N."/>
            <person name="Kabra M."/>
            <person name="Hebbar S.A."/>
            <person name="Bhat R.Y."/>
            <person name="Matta D."/>
            <person name="Ekbote A.V."/>
            <person name="Puri R.D."/>
            <person name="Phadke S.R."/>
            <person name="Gowrishankar K."/>
            <person name="Aggarwal S."/>
            <person name="Ranganath P."/>
            <person name="Sharda S."/>
            <person name="Kamate M."/>
            <person name="Datar C.A."/>
            <person name="Bhat K."/>
            <person name="Kamath N."/>
            <person name="Shah H."/>
            <person name="Krishna S."/>
            <person name="Gopinath P.M."/>
            <person name="Verma I.C."/>
            <person name="Nagarajaram H.A."/>
            <person name="Satyamoorthy K."/>
            <person name="Girisha K.M."/>
        </authorList>
    </citation>
    <scope>VARIANTS GM1G2 CYS-49; ARG-134; CYS-148; GLU-262; LEU-314; PRO-337; VAL-414; ASN-493; LEU-597 AND ILE-600</scope>
    <scope>CHARACTERIZATION OF VARIANTS GM1G2 CYS-49; GLU-262; LEU-314; PRO-337; VAL-414; ASN-493; LEU-597 AND ILE-600</scope>
    <scope>VARIANTS GM1G1 TRP-68; ARG-123; PRO-236; CYS-331; ASN-332; PRO-337; HIS-482 AND PRO-514</scope>
    <scope>CHARACTERIZATION OF VARIANTS GM1G1 TRP-68; ARG-123; PRO-236; ASN-332; PRO-337; HIS-482 AND PRO-514</scope>
    <scope>VARIANT GM1G3 PHE-297</scope>
    <scope>CHARACTERIZATION OF VARIANT GM1G3 PHE-297</scope>
    <scope>VARIANTS GLN-129 AND CYS-521</scope>
    <scope>CATALYTIC ACTIVITY</scope>
    <scope>FUNCTION</scope>
</reference>
<accession>P16278</accession>
<accession>B2R7H8</accession>
<accession>B7Z6B0</accession>
<accession>P16279</accession>
<proteinExistence type="evidence at protein level"/>
<organism>
    <name type="scientific">Homo sapiens</name>
    <name type="common">Human</name>
    <dbReference type="NCBI Taxonomy" id="9606"/>
    <lineage>
        <taxon>Eukaryota</taxon>
        <taxon>Metazoa</taxon>
        <taxon>Chordata</taxon>
        <taxon>Craniata</taxon>
        <taxon>Vertebrata</taxon>
        <taxon>Euteleostomi</taxon>
        <taxon>Mammalia</taxon>
        <taxon>Eutheria</taxon>
        <taxon>Euarchontoglires</taxon>
        <taxon>Primates</taxon>
        <taxon>Haplorrhini</taxon>
        <taxon>Catarrhini</taxon>
        <taxon>Hominidae</taxon>
        <taxon>Homo</taxon>
    </lineage>
</organism>
<dbReference type="EC" id="3.2.1.23" evidence="14 28 31 32 33 35 38"/>
<dbReference type="EMBL" id="M22590">
    <property type="protein sequence ID" value="AAA51822.1"/>
    <property type="molecule type" value="mRNA"/>
</dbReference>
<dbReference type="EMBL" id="M27507">
    <property type="protein sequence ID" value="AAA51819.1"/>
    <property type="molecule type" value="mRNA"/>
</dbReference>
<dbReference type="EMBL" id="M27508">
    <property type="protein sequence ID" value="AAA35599.1"/>
    <property type="molecule type" value="mRNA"/>
</dbReference>
<dbReference type="EMBL" id="M34423">
    <property type="protein sequence ID" value="AAA51823.1"/>
    <property type="molecule type" value="mRNA"/>
</dbReference>
<dbReference type="EMBL" id="AK300021">
    <property type="protein sequence ID" value="BAH13196.1"/>
    <property type="molecule type" value="mRNA"/>
</dbReference>
<dbReference type="EMBL" id="AK312988">
    <property type="protein sequence ID" value="BAG35825.1"/>
    <property type="molecule type" value="mRNA"/>
</dbReference>
<dbReference type="EMBL" id="BT007147">
    <property type="protein sequence ID" value="AAP35811.1"/>
    <property type="molecule type" value="mRNA"/>
</dbReference>
<dbReference type="EMBL" id="AC112211">
    <property type="status" value="NOT_ANNOTATED_CDS"/>
    <property type="molecule type" value="Genomic_DNA"/>
</dbReference>
<dbReference type="EMBL" id="BC007493">
    <property type="protein sequence ID" value="AAH07493.1"/>
    <property type="molecule type" value="mRNA"/>
</dbReference>
<dbReference type="CCDS" id="CCDS43061.1">
    <molecule id="P16278-1"/>
</dbReference>
<dbReference type="CCDS" id="CCDS43062.1">
    <molecule id="P16278-3"/>
</dbReference>
<dbReference type="CCDS" id="CCDS46785.1">
    <molecule id="P16278-2"/>
</dbReference>
<dbReference type="PIR" id="A32688">
    <property type="entry name" value="A32611"/>
</dbReference>
<dbReference type="PIR" id="B32688">
    <property type="entry name" value="B32688"/>
</dbReference>
<dbReference type="RefSeq" id="NP_000395.2">
    <property type="nucleotide sequence ID" value="NM_000404.3"/>
</dbReference>
<dbReference type="RefSeq" id="NP_001073279.1">
    <property type="nucleotide sequence ID" value="NM_001079811.2"/>
</dbReference>
<dbReference type="RefSeq" id="NP_001129074.1">
    <property type="nucleotide sequence ID" value="NM_001135602.2"/>
</dbReference>
<dbReference type="RefSeq" id="NP_001303969.1">
    <property type="nucleotide sequence ID" value="NM_001317040.1"/>
</dbReference>
<dbReference type="PDB" id="3THC">
    <property type="method" value="X-ray"/>
    <property type="resolution" value="1.80 A"/>
    <property type="chains" value="A/B/C/D=24-677"/>
</dbReference>
<dbReference type="PDB" id="3THD">
    <property type="method" value="X-ray"/>
    <property type="resolution" value="1.79 A"/>
    <property type="chains" value="A/B/C/D=24-677"/>
</dbReference>
<dbReference type="PDB" id="3WEZ">
    <property type="method" value="X-ray"/>
    <property type="resolution" value="2.11 A"/>
    <property type="chains" value="A/B/C/D=24-677"/>
</dbReference>
<dbReference type="PDB" id="3WF0">
    <property type="method" value="X-ray"/>
    <property type="resolution" value="2.20 A"/>
    <property type="chains" value="A/B/C/D=24-677"/>
</dbReference>
<dbReference type="PDB" id="3WF1">
    <property type="method" value="X-ray"/>
    <property type="resolution" value="2.00 A"/>
    <property type="chains" value="A/B/C/D=24-677"/>
</dbReference>
<dbReference type="PDB" id="3WF2">
    <property type="method" value="X-ray"/>
    <property type="resolution" value="2.30 A"/>
    <property type="chains" value="A/B/C/D=24-677"/>
</dbReference>
<dbReference type="PDB" id="3WF3">
    <property type="method" value="X-ray"/>
    <property type="resolution" value="2.15 A"/>
    <property type="chains" value="A/B/C/D=24-677"/>
</dbReference>
<dbReference type="PDB" id="3WF4">
    <property type="method" value="X-ray"/>
    <property type="resolution" value="2.30 A"/>
    <property type="chains" value="A/B/C/D=24-677"/>
</dbReference>
<dbReference type="PDBsum" id="3THC"/>
<dbReference type="PDBsum" id="3THD"/>
<dbReference type="PDBsum" id="3WEZ"/>
<dbReference type="PDBsum" id="3WF0"/>
<dbReference type="PDBsum" id="3WF1"/>
<dbReference type="PDBsum" id="3WF2"/>
<dbReference type="PDBsum" id="3WF3"/>
<dbReference type="PDBsum" id="3WF4"/>
<dbReference type="SMR" id="P16278"/>
<dbReference type="BioGRID" id="108984">
    <property type="interactions" value="123"/>
</dbReference>
<dbReference type="CORUM" id="P16278"/>
<dbReference type="FunCoup" id="P16278">
    <property type="interactions" value="1355"/>
</dbReference>
<dbReference type="IntAct" id="P16278">
    <property type="interactions" value="63"/>
</dbReference>
<dbReference type="MINT" id="P16278"/>
<dbReference type="STRING" id="9606.ENSP00000306920"/>
<dbReference type="BindingDB" id="P16278"/>
<dbReference type="ChEMBL" id="CHEMBL2522"/>
<dbReference type="DrugBank" id="DB04465">
    <property type="generic name" value="Lactose"/>
</dbReference>
<dbReference type="DrugCentral" id="P16278"/>
<dbReference type="CAZy" id="GH35">
    <property type="family name" value="Glycoside Hydrolase Family 35"/>
</dbReference>
<dbReference type="GlyConnect" id="1036">
    <property type="glycosylation" value="15 N-Linked glycans (3 sites)"/>
</dbReference>
<dbReference type="GlyCosmos" id="P16278">
    <property type="glycosylation" value="7 sites, 14 glycans"/>
</dbReference>
<dbReference type="GlyGen" id="P16278">
    <property type="glycosylation" value="8 sites, 81 N-linked glycans (4 sites), 1 O-linked glycan (1 site)"/>
</dbReference>
<dbReference type="iPTMnet" id="P16278"/>
<dbReference type="PhosphoSitePlus" id="P16278"/>
<dbReference type="SwissPalm" id="P16278"/>
<dbReference type="BioMuta" id="GLB1"/>
<dbReference type="DMDM" id="215273939"/>
<dbReference type="jPOST" id="P16278"/>
<dbReference type="MassIVE" id="P16278"/>
<dbReference type="PaxDb" id="9606-ENSP00000306920"/>
<dbReference type="PeptideAtlas" id="P16278"/>
<dbReference type="ProteomicsDB" id="53332">
    <molecule id="P16278-1"/>
</dbReference>
<dbReference type="ProteomicsDB" id="53333">
    <molecule id="P16278-2"/>
</dbReference>
<dbReference type="ProteomicsDB" id="53334">
    <molecule id="P16278-3"/>
</dbReference>
<dbReference type="Pumba" id="P16278"/>
<dbReference type="Antibodypedia" id="3647">
    <property type="antibodies" value="703 antibodies from 38 providers"/>
</dbReference>
<dbReference type="DNASU" id="2720"/>
<dbReference type="Ensembl" id="ENST00000307363.10">
    <property type="protein sequence ID" value="ENSP00000306920.4"/>
    <property type="gene ID" value="ENSG00000170266.16"/>
</dbReference>
<dbReference type="Ensembl" id="ENST00000399402.7">
    <property type="protein sequence ID" value="ENSP00000382333.2"/>
    <property type="gene ID" value="ENSG00000170266.16"/>
</dbReference>
<dbReference type="GeneID" id="2720"/>
<dbReference type="KEGG" id="hsa:2720"/>
<dbReference type="MANE-Select" id="ENST00000307363.10">
    <property type="protein sequence ID" value="ENSP00000306920.4"/>
    <property type="RefSeq nucleotide sequence ID" value="NM_000404.4"/>
    <property type="RefSeq protein sequence ID" value="NP_000395.3"/>
</dbReference>
<dbReference type="UCSC" id="uc003cfh.2">
    <molecule id="P16278-1"/>
    <property type="organism name" value="human"/>
</dbReference>
<dbReference type="AGR" id="HGNC:4298"/>
<dbReference type="CTD" id="2720"/>
<dbReference type="DisGeNET" id="2720"/>
<dbReference type="GeneCards" id="GLB1"/>
<dbReference type="GeneReviews" id="GLB1"/>
<dbReference type="HGNC" id="HGNC:4298">
    <property type="gene designation" value="GLB1"/>
</dbReference>
<dbReference type="HPA" id="ENSG00000170266">
    <property type="expression patterns" value="Low tissue specificity"/>
</dbReference>
<dbReference type="MalaCards" id="GLB1"/>
<dbReference type="MIM" id="230500">
    <property type="type" value="phenotype"/>
</dbReference>
<dbReference type="MIM" id="230600">
    <property type="type" value="phenotype"/>
</dbReference>
<dbReference type="MIM" id="230650">
    <property type="type" value="phenotype"/>
</dbReference>
<dbReference type="MIM" id="253010">
    <property type="type" value="phenotype"/>
</dbReference>
<dbReference type="MIM" id="611458">
    <property type="type" value="gene"/>
</dbReference>
<dbReference type="neXtProt" id="NX_P16278"/>
<dbReference type="Orphanet" id="79255">
    <property type="disease" value="GM1 gangliosidosis type 1"/>
</dbReference>
<dbReference type="Orphanet" id="79256">
    <property type="disease" value="GM1 gangliosidosis type 2"/>
</dbReference>
<dbReference type="Orphanet" id="79257">
    <property type="disease" value="GM1 gangliosidosis type 3"/>
</dbReference>
<dbReference type="Orphanet" id="309310">
    <property type="disease" value="Mucopolysaccharidosis type 4B"/>
</dbReference>
<dbReference type="PharmGKB" id="PA28709"/>
<dbReference type="VEuPathDB" id="HostDB:ENSG00000170266"/>
<dbReference type="eggNOG" id="KOG0496">
    <property type="taxonomic scope" value="Eukaryota"/>
</dbReference>
<dbReference type="HOGENOM" id="CLU_007853_7_2_1"/>
<dbReference type="InParanoid" id="P16278"/>
<dbReference type="OrthoDB" id="1657402at2759"/>
<dbReference type="PAN-GO" id="P16278">
    <property type="GO annotations" value="2 GO annotations based on evolutionary models"/>
</dbReference>
<dbReference type="PhylomeDB" id="P16278"/>
<dbReference type="TreeFam" id="TF314816"/>
<dbReference type="PathwayCommons" id="P16278"/>
<dbReference type="Reactome" id="R-HSA-2022857">
    <property type="pathway name" value="Keratan sulfate degradation"/>
</dbReference>
<dbReference type="Reactome" id="R-HSA-2024096">
    <property type="pathway name" value="HS-GAG degradation"/>
</dbReference>
<dbReference type="Reactome" id="R-HSA-2206308">
    <property type="pathway name" value="MPS IV - Morquio syndrome B"/>
</dbReference>
<dbReference type="Reactome" id="R-HSA-4085001">
    <property type="pathway name" value="Sialic acid metabolism"/>
</dbReference>
<dbReference type="Reactome" id="R-HSA-4341670">
    <property type="pathway name" value="Defective NEU1 causes sialidosis"/>
</dbReference>
<dbReference type="Reactome" id="R-HSA-6798695">
    <property type="pathway name" value="Neutrophil degranulation"/>
</dbReference>
<dbReference type="Reactome" id="R-HSA-9840310">
    <property type="pathway name" value="Glycosphingolipid catabolism"/>
</dbReference>
<dbReference type="SABIO-RK" id="P16278"/>
<dbReference type="SignaLink" id="P16278"/>
<dbReference type="BioGRID-ORCS" id="2720">
    <property type="hits" value="12 hits in 1163 CRISPR screens"/>
</dbReference>
<dbReference type="ChiTaRS" id="GLB1">
    <property type="organism name" value="human"/>
</dbReference>
<dbReference type="EvolutionaryTrace" id="P16278"/>
<dbReference type="GeneWiki" id="GLB1"/>
<dbReference type="GenomeRNAi" id="2720"/>
<dbReference type="Pharos" id="P16278">
    <property type="development level" value="Tchem"/>
</dbReference>
<dbReference type="PRO" id="PR:P16278"/>
<dbReference type="Proteomes" id="UP000005640">
    <property type="component" value="Chromosome 3"/>
</dbReference>
<dbReference type="RNAct" id="P16278">
    <property type="molecule type" value="protein"/>
</dbReference>
<dbReference type="Bgee" id="ENSG00000170266">
    <property type="expression patterns" value="Expressed in monocyte and 180 other cell types or tissues"/>
</dbReference>
<dbReference type="ExpressionAtlas" id="P16278">
    <property type="expression patterns" value="baseline and differential"/>
</dbReference>
<dbReference type="GO" id="GO:0035578">
    <property type="term" value="C:azurophil granule lumen"/>
    <property type="evidence" value="ECO:0000304"/>
    <property type="project" value="Reactome"/>
</dbReference>
<dbReference type="GO" id="GO:0005737">
    <property type="term" value="C:cytoplasm"/>
    <property type="evidence" value="ECO:0000314"/>
    <property type="project" value="BHF-UCL"/>
</dbReference>
<dbReference type="GO" id="GO:0070062">
    <property type="term" value="C:extracellular exosome"/>
    <property type="evidence" value="ECO:0007005"/>
    <property type="project" value="UniProtKB"/>
</dbReference>
<dbReference type="GO" id="GO:0005576">
    <property type="term" value="C:extracellular region"/>
    <property type="evidence" value="ECO:0000304"/>
    <property type="project" value="Reactome"/>
</dbReference>
<dbReference type="GO" id="GO:1904813">
    <property type="term" value="C:ficolin-1-rich granule lumen"/>
    <property type="evidence" value="ECO:0000304"/>
    <property type="project" value="Reactome"/>
</dbReference>
<dbReference type="GO" id="GO:0005794">
    <property type="term" value="C:Golgi apparatus"/>
    <property type="evidence" value="ECO:0000314"/>
    <property type="project" value="HPA"/>
</dbReference>
<dbReference type="GO" id="GO:0043231">
    <property type="term" value="C:intracellular membrane-bounded organelle"/>
    <property type="evidence" value="ECO:0000314"/>
    <property type="project" value="HPA"/>
</dbReference>
<dbReference type="GO" id="GO:0043202">
    <property type="term" value="C:lysosomal lumen"/>
    <property type="evidence" value="ECO:0000304"/>
    <property type="project" value="Reactome"/>
</dbReference>
<dbReference type="GO" id="GO:0005764">
    <property type="term" value="C:lysosome"/>
    <property type="evidence" value="ECO:0000315"/>
    <property type="project" value="FlyBase"/>
</dbReference>
<dbReference type="GO" id="GO:0016020">
    <property type="term" value="C:membrane"/>
    <property type="evidence" value="ECO:0007669"/>
    <property type="project" value="GOC"/>
</dbReference>
<dbReference type="GO" id="GO:0048471">
    <property type="term" value="C:perinuclear region of cytoplasm"/>
    <property type="evidence" value="ECO:0007669"/>
    <property type="project" value="UniProtKB-SubCell"/>
</dbReference>
<dbReference type="GO" id="GO:0005773">
    <property type="term" value="C:vacuole"/>
    <property type="evidence" value="ECO:0000318"/>
    <property type="project" value="GO_Central"/>
</dbReference>
<dbReference type="GO" id="GO:0004565">
    <property type="term" value="F:beta-galactosidase activity"/>
    <property type="evidence" value="ECO:0000314"/>
    <property type="project" value="UniProtKB"/>
</dbReference>
<dbReference type="GO" id="GO:0016936">
    <property type="term" value="F:galactoside binding"/>
    <property type="evidence" value="ECO:0007669"/>
    <property type="project" value="Ensembl"/>
</dbReference>
<dbReference type="GO" id="GO:0042803">
    <property type="term" value="F:protein homodimerization activity"/>
    <property type="evidence" value="ECO:0000353"/>
    <property type="project" value="UniProtKB"/>
</dbReference>
<dbReference type="GO" id="GO:0005975">
    <property type="term" value="P:carbohydrate metabolic process"/>
    <property type="evidence" value="ECO:0000314"/>
    <property type="project" value="BHF-UCL"/>
</dbReference>
<dbReference type="GO" id="GO:0019388">
    <property type="term" value="P:galactose catabolic process"/>
    <property type="evidence" value="ECO:0000318"/>
    <property type="project" value="GO_Central"/>
</dbReference>
<dbReference type="GO" id="GO:0006689">
    <property type="term" value="P:ganglioside catabolic process"/>
    <property type="evidence" value="ECO:0000315"/>
    <property type="project" value="FlyBase"/>
</dbReference>
<dbReference type="GO" id="GO:0006516">
    <property type="term" value="P:glycoprotein catabolic process"/>
    <property type="evidence" value="ECO:0000315"/>
    <property type="project" value="FlyBase"/>
</dbReference>
<dbReference type="GO" id="GO:0046479">
    <property type="term" value="P:glycosphingolipid catabolic process"/>
    <property type="evidence" value="ECO:0000304"/>
    <property type="project" value="Reactome"/>
</dbReference>
<dbReference type="GO" id="GO:0030200">
    <property type="term" value="P:heparan sulfate proteoglycan catabolic process"/>
    <property type="evidence" value="ECO:0000304"/>
    <property type="project" value="Reactome"/>
</dbReference>
<dbReference type="GO" id="GO:0042340">
    <property type="term" value="P:keratan sulfate proteoglycan catabolic process"/>
    <property type="evidence" value="ECO:0000315"/>
    <property type="project" value="FlyBase"/>
</dbReference>
<dbReference type="GO" id="GO:0051413">
    <property type="term" value="P:response to cortisone"/>
    <property type="evidence" value="ECO:0007669"/>
    <property type="project" value="Ensembl"/>
</dbReference>
<dbReference type="GO" id="GO:1904016">
    <property type="term" value="P:response to Thyroglobulin triiodothyronine"/>
    <property type="evidence" value="ECO:0007669"/>
    <property type="project" value="Ensembl"/>
</dbReference>
<dbReference type="DisProt" id="DP02785"/>
<dbReference type="FunFam" id="2.60.120.260:FF:000115">
    <property type="entry name" value="Beta-galactosidase"/>
    <property type="match status" value="1"/>
</dbReference>
<dbReference type="FunFam" id="2.60.120.260:FF:000260">
    <property type="entry name" value="Beta-galactosidase"/>
    <property type="match status" value="1"/>
</dbReference>
<dbReference type="FunFam" id="3.20.20.80:FF:000017">
    <property type="entry name" value="Beta-galactosidase"/>
    <property type="match status" value="1"/>
</dbReference>
<dbReference type="Gene3D" id="2.60.120.260">
    <property type="entry name" value="Galactose-binding domain-like"/>
    <property type="match status" value="2"/>
</dbReference>
<dbReference type="Gene3D" id="3.20.20.80">
    <property type="entry name" value="Glycosidases"/>
    <property type="match status" value="1"/>
</dbReference>
<dbReference type="InterPro" id="IPR026283">
    <property type="entry name" value="B-gal_1-like"/>
</dbReference>
<dbReference type="InterPro" id="IPR048912">
    <property type="entry name" value="BetaGal1-like_ABD1"/>
</dbReference>
<dbReference type="InterPro" id="IPR048913">
    <property type="entry name" value="BetaGal_gal-bd"/>
</dbReference>
<dbReference type="InterPro" id="IPR008979">
    <property type="entry name" value="Galactose-bd-like_sf"/>
</dbReference>
<dbReference type="InterPro" id="IPR031330">
    <property type="entry name" value="Gly_Hdrlase_35_cat"/>
</dbReference>
<dbReference type="InterPro" id="IPR019801">
    <property type="entry name" value="Glyco_hydro_35_CS"/>
</dbReference>
<dbReference type="InterPro" id="IPR001944">
    <property type="entry name" value="Glycoside_Hdrlase_35"/>
</dbReference>
<dbReference type="InterPro" id="IPR017853">
    <property type="entry name" value="Glycoside_hydrolase_SF"/>
</dbReference>
<dbReference type="PANTHER" id="PTHR23421">
    <property type="entry name" value="BETA-GALACTOSIDASE RELATED"/>
    <property type="match status" value="1"/>
</dbReference>
<dbReference type="Pfam" id="PF21317">
    <property type="entry name" value="BetaGal_ABD_1"/>
    <property type="match status" value="1"/>
</dbReference>
<dbReference type="Pfam" id="PF21467">
    <property type="entry name" value="BetaGal_gal-bd"/>
    <property type="match status" value="1"/>
</dbReference>
<dbReference type="Pfam" id="PF01301">
    <property type="entry name" value="Glyco_hydro_35"/>
    <property type="match status" value="1"/>
</dbReference>
<dbReference type="PIRSF" id="PIRSF006336">
    <property type="entry name" value="B-gal"/>
    <property type="match status" value="1"/>
</dbReference>
<dbReference type="PRINTS" id="PR00742">
    <property type="entry name" value="GLHYDRLASE35"/>
</dbReference>
<dbReference type="SUPFAM" id="SSF51445">
    <property type="entry name" value="(Trans)glycosidases"/>
    <property type="match status" value="1"/>
</dbReference>
<dbReference type="SUPFAM" id="SSF49785">
    <property type="entry name" value="Galactose-binding domain-like"/>
    <property type="match status" value="1"/>
</dbReference>
<dbReference type="PROSITE" id="PS01182">
    <property type="entry name" value="GLYCOSYL_HYDROL_F35"/>
    <property type="match status" value="1"/>
</dbReference>
<feature type="signal peptide">
    <location>
        <begin position="1"/>
        <end position="23"/>
    </location>
</feature>
<feature type="propeptide" id="PRO_0000012185" evidence="53">
    <location>
        <begin position="24"/>
        <end position="28"/>
    </location>
</feature>
<feature type="chain" id="PRO_0000012186" description="Beta-galactosidase">
    <location>
        <begin position="29"/>
        <end position="677"/>
    </location>
</feature>
<feature type="region of interest" description="Disordered" evidence="2">
    <location>
        <begin position="650"/>
        <end position="677"/>
    </location>
</feature>
<feature type="compositionally biased region" description="Basic and acidic residues" evidence="2">
    <location>
        <begin position="652"/>
        <end position="661"/>
    </location>
</feature>
<feature type="compositionally biased region" description="Basic and acidic residues" evidence="2">
    <location>
        <begin position="668"/>
        <end position="677"/>
    </location>
</feature>
<feature type="active site" description="Proton donor" evidence="52">
    <location>
        <position position="188"/>
    </location>
</feature>
<feature type="active site" description="Nucleophile" evidence="52">
    <location>
        <position position="268"/>
    </location>
</feature>
<feature type="binding site" evidence="30 31 55 61">
    <location>
        <position position="83"/>
    </location>
    <ligand>
        <name>substrate</name>
    </ligand>
</feature>
<feature type="binding site" evidence="30 31 55 61">
    <location>
        <position position="129"/>
    </location>
    <ligand>
        <name>substrate</name>
    </ligand>
</feature>
<feature type="binding site" evidence="30 31 55 61">
    <location>
        <position position="187"/>
    </location>
    <ligand>
        <name>substrate</name>
    </ligand>
</feature>
<feature type="binding site" evidence="30 31 55 61">
    <location>
        <position position="333"/>
    </location>
    <ligand>
        <name>substrate</name>
    </ligand>
</feature>
<feature type="glycosylation site" description="N-linked (GlcNAc...) asparagine" evidence="1">
    <location>
        <position position="26"/>
    </location>
</feature>
<feature type="glycosylation site" description="N-linked (GlcNAc...) asparagine" evidence="30 31 55 56 57 58 59 60 61 62">
    <location>
        <position position="247"/>
    </location>
</feature>
<feature type="glycosylation site" description="N-linked (GlcNAc...) asparagine" evidence="17 26 30 31 55 56 57 58 59 60 61 62">
    <location>
        <position position="464"/>
    </location>
</feature>
<feature type="glycosylation site" description="N-linked (GlcNAc...) asparagine" evidence="30 31 55 56 57 58 59 60 61 62">
    <location>
        <position position="498"/>
    </location>
</feature>
<feature type="glycosylation site" description="N-linked (GlcNAc...) asparagine" evidence="1">
    <location>
        <position position="542"/>
    </location>
</feature>
<feature type="glycosylation site" description="N-linked (GlcNAc...) asparagine" evidence="1">
    <location>
        <position position="545"/>
    </location>
</feature>
<feature type="glycosylation site" description="N-linked (GlcNAc...) asparagine" evidence="26 30 31 55 56 57 58 59 60 61 62">
    <location>
        <position position="555"/>
    </location>
</feature>
<feature type="disulfide bond" evidence="30 31 55 56 57 58 59 60 61 62">
    <location>
        <begin position="195"/>
        <end position="230"/>
    </location>
</feature>
<feature type="disulfide bond" evidence="30 31 55 56 57 58 59 60 61 62">
    <location>
        <begin position="626"/>
        <end position="634"/>
    </location>
</feature>
<feature type="splice variant" id="VSP_039974" description="In isoform 3." evidence="47">
    <location>
        <begin position="1"/>
        <end position="30"/>
    </location>
</feature>
<feature type="splice variant" id="VSP_031241" description="In isoform 2." evidence="48">
    <original>YVPWNFHEPWPGQYQFSEDHDVEYFLRLAHELGLLVILRPGPYICAEWEMGGLPAWLLEKESILLRSSDPDYLAAVDKWLGVLLPKMKPLLYQNGGPVITVQVENEYGSYFACDFDYLRFLQKRFRHHLGDDVVLFTTDGAHKTFLKCGALQGLYTTVDFGT</original>
    <variation>LPGSCGQVVGSPSAQDEASPLSEWRASYNSA</variation>
    <location>
        <begin position="83"/>
        <end position="244"/>
    </location>
</feature>
<feature type="sequence variant" id="VAR_008671" description="In dbSNP:rs7637099." evidence="3 7 10 13 15 29 32 46">
    <original>P</original>
    <variation>L</variation>
    <location>
        <position position="10"/>
    </location>
</feature>
<feature type="sequence variant" id="VAR_003329" description="In GM1G1 and GM1G2; decrease in galactosidase activity; dbSNP:rs72555358." evidence="25 33">
    <original>R</original>
    <variation>C</variation>
    <location>
        <position position="49"/>
    </location>
</feature>
<feature type="sequence variant" id="VAR_062340" description="In GM1G3; dbSNP:rs780523881." evidence="16">
    <original>R</original>
    <variation>H</variation>
    <location>
        <position position="49"/>
    </location>
</feature>
<feature type="sequence variant" id="VAR_003330" description="In GM1G3; no effect on catalytic activity; decreased protein stability; dbSNP:rs72555390." evidence="24 25 31">
    <original>I</original>
    <variation>T</variation>
    <location>
        <position position="51"/>
    </location>
</feature>
<feature type="sequence variant" id="VAR_026129" description="In GM1G1; loss of galactosidase activity; severe mutation; dbSNP:rs756878418." evidence="14 20 21">
    <original>R</original>
    <variation>C</variation>
    <location>
        <position position="59"/>
    </location>
</feature>
<feature type="sequence variant" id="VAR_008672" description="In GM1G1; with cardiac involvement in some patients; loss of galactosidase activity; severe mutation; dbSNP:rs72555392." evidence="3 4 14 20 21 23 28 45">
    <original>R</original>
    <variation>H</variation>
    <location>
        <position position="59"/>
    </location>
</feature>
<feature type="sequence variant" id="VAR_062341" description="In GM1G2; 7.4% of wild-type galactosidase activity; dbSNP:rs572237881." evidence="28">
    <original>R</original>
    <variation>Q</variation>
    <location>
        <position position="68"/>
    </location>
</feature>
<feature type="sequence variant" id="VAR_026130" description="In GM1G2 and GM1G1; loss of galactosidase activity; dbSNP:rs72555370." evidence="9 33">
    <original>R</original>
    <variation>W</variation>
    <location>
        <position position="68"/>
    </location>
</feature>
<feature type="sequence variant" id="VAR_062342" description="In GM1G3." evidence="16">
    <original>K</original>
    <variation>E</variation>
    <location>
        <position position="73"/>
    </location>
</feature>
<feature type="sequence variant" id="VAR_008673" description="In GM1G3; mild phenotype; dbSNP:rs72555393." evidence="7 28 37">
    <original>T</original>
    <variation>M</variation>
    <location>
        <position position="82"/>
    </location>
</feature>
<feature type="sequence variant" id="VAR_062343" description="In MPS4B; decrease in galactosidase activity; dbSNP:rs1553612220." evidence="20 23">
    <original>Y</original>
    <variation>C</variation>
    <location>
        <position position="83"/>
    </location>
</feature>
<feature type="sequence variant" id="VAR_008674" description="In MPS4B; 2-5% of wild-type galactosidase activity; dbSNP:rs72555364." evidence="36">
    <original>Y</original>
    <variation>H</variation>
    <location>
        <position position="83"/>
    </location>
</feature>
<feature type="sequence variant" id="VAR_053875" description="In dbSNP:rs35289681.">
    <original>R</original>
    <variation>W</variation>
    <location>
        <position position="109"/>
    </location>
</feature>
<feature type="sequence variant" id="VAR_008675" description="In GM1G1; dbSNP:rs879050821." evidence="3">
    <original>R</original>
    <variation>S</variation>
    <location>
        <position position="121"/>
    </location>
</feature>
<feature type="sequence variant" id="VAR_003331" description="In GM1G1; decrease in galactosidase activity; dbSNP:rs28934274." evidence="24 33">
    <original>G</original>
    <variation>R</variation>
    <location>
        <position position="123"/>
    </location>
</feature>
<feature type="sequence variant" id="VAR_074054" description="In dbSNP:rs886042079." evidence="33">
    <original>E</original>
    <variation>Q</variation>
    <location>
        <position position="129"/>
    </location>
</feature>
<feature type="sequence variant" id="VAR_062344" description="In GM1G1; 4.3% of wild-type galactosidase activity; dbSNP:rs1553612189." evidence="28">
    <original>M</original>
    <variation>T</variation>
    <location>
        <position position="132"/>
    </location>
</feature>
<feature type="sequence variant" id="VAR_074055" description="In GM1G2; uncertain significance." evidence="33">
    <original>G</original>
    <variation>R</variation>
    <location>
        <position position="134"/>
    </location>
</feature>
<feature type="sequence variant" id="VAR_037937" description="In GM1G1; dbSNP:rs773562141." evidence="21">
    <original>G</original>
    <variation>V</variation>
    <location>
        <position position="134"/>
    </location>
</feature>
<feature type="sequence variant" id="VAR_062345" description="In GM1G1; dbSNP:rs747305905." evidence="20">
    <original>P</original>
    <variation>S</variation>
    <location>
        <position position="136"/>
    </location>
</feature>
<feature type="sequence variant" id="VAR_037938" description="In GM1G1." evidence="21">
    <location>
        <position position="147"/>
    </location>
</feature>
<feature type="sequence variant" id="VAR_062346" description="In GM1G3 and GM1G2; dbSNP:rs192732174." evidence="16 33">
    <original>R</original>
    <variation>C</variation>
    <location>
        <position position="148"/>
    </location>
</feature>
<feature type="sequence variant" id="VAR_013541" description="In GM1G1; dbSNP:rs192732174." evidence="5 43">
    <original>R</original>
    <variation>S</variation>
    <location>
        <position position="148"/>
    </location>
</feature>
<feature type="sequence variant" id="VAR_062347" description="In MPS4B; 2.0% of wild-type galactosidase activity; dbSNP:rs778700089." evidence="28">
    <original>S</original>
    <variation>F</variation>
    <location>
        <position position="149"/>
    </location>
</feature>
<feature type="sequence variant" id="VAR_062348" description="In GM1G1." evidence="20">
    <original>D</original>
    <variation>V</variation>
    <location>
        <position position="151"/>
    </location>
</feature>
<feature type="sequence variant" id="VAR_026131" description="In GM1G1; complete lack of protein; loss of galactosidase activity." evidence="12 15">
    <original>D</original>
    <variation>Y</variation>
    <location>
        <position position="151"/>
    </location>
</feature>
<feature type="sequence variant" id="VAR_037939" description="In GM1G2 and GM1G3; 6.7% of wild-type galactosidase activity; dbSNP:rs376710410." evidence="21 28">
    <original>L</original>
    <variation>R</variation>
    <location>
        <position position="155"/>
    </location>
</feature>
<feature type="sequence variant" id="VAR_037940" description="In GM1G1; loss of galactosidase activity." evidence="21 23">
    <original>L</original>
    <variation>S</variation>
    <location>
        <position position="162"/>
    </location>
</feature>
<feature type="sequence variant" id="VAR_062349" description="In GM1G1; loss of galactosidase activity; dbSNP:rs397515617." evidence="20 23">
    <original>L</original>
    <variation>P</variation>
    <location>
        <position position="173"/>
    </location>
</feature>
<feature type="sequence variant" id="VAR_062350" description="In GM1G1; loss of galactosidase activity." evidence="28">
    <original>Q</original>
    <variation>R</variation>
    <location>
        <position position="184"/>
    </location>
</feature>
<feature type="sequence variant" id="VAR_062351" description="In GM1G1; 3.4% of wild-type galactosidase activity; dbSNP:rs756575833." evidence="28">
    <original>G</original>
    <variation>D</variation>
    <location>
        <position position="190"/>
    </location>
</feature>
<feature type="sequence variant" id="VAR_062352" description="In MPS4B; 17.4% of wild-type galactosidase activity." evidence="28">
    <original>D</original>
    <variation>Y</variation>
    <location>
        <position position="198"/>
    </location>
</feature>
<feature type="sequence variant" id="VAR_062353" description="In GM1G1." evidence="20">
    <original>Y</original>
    <variation>C</variation>
    <location>
        <position position="199"/>
    </location>
</feature>
<feature type="sequence variant" id="VAR_003332" description="In GM1G1 and GM1G2; no effect on intrinsic catalytic activity; decreased protein stability; 8.4% of wild-type galactosidase activity; activity severely reduced in transfection with variant F-436; dbSNP:rs72555360." evidence="9 18 24 25 28 31">
    <original>R</original>
    <variation>C</variation>
    <location>
        <position position="201"/>
    </location>
</feature>
<feature type="sequence variant" id="VAR_013542" description="In GM1G1 and GM1G2; also in a patient with a slowly progressive GM1-gangliosidosis form; 36.2% of wild-type galactosidase activity; dbSNP:rs189115557." evidence="4 14 18 20 21 23 28 42">
    <original>R</original>
    <variation>H</variation>
    <location>
        <position position="201"/>
    </location>
</feature>
<feature type="sequence variant" id="VAR_008676" description="In GM1G1; dbSNP:rs72555366." evidence="3 14 21 39">
    <original>R</original>
    <variation>C</variation>
    <location>
        <position position="208"/>
    </location>
</feature>
<feature type="sequence variant" id="VAR_013543" description="In GM1G3." evidence="43">
    <original>D</original>
    <variation>Y</variation>
    <location>
        <position position="214"/>
    </location>
</feature>
<feature type="sequence variant" id="VAR_013544" description="In GM1G1; dbSNP:rs886042815." evidence="43">
    <original>V</original>
    <variation>A</variation>
    <location>
        <position position="216"/>
    </location>
</feature>
<feature type="sequence variant" id="VAR_074056" description="In GM1G1; decrease in galactosidase activity." evidence="33">
    <original>L</original>
    <variation>P</variation>
    <location>
        <position position="236"/>
    </location>
</feature>
<feature type="sequence variant" id="VAR_026132" description="In GM1G1; loss of galactosidase activity; severe mutation; causes a rapid degradation of the protein precursor; dbSNP:rs746766232." evidence="14 28">
    <original>T</original>
    <variation>M</variation>
    <location>
        <position position="239"/>
    </location>
</feature>
<feature type="sequence variant" id="VAR_008677" description="In GM1G1." evidence="3">
    <original>V</original>
    <variation>M</variation>
    <location>
        <position position="240"/>
    </location>
</feature>
<feature type="sequence variant" id="VAR_062354" description="In GM1G1; 2.4% of wild-type galactosidase activity; dbSNP:rs1553610553." evidence="28">
    <original>Q</original>
    <variation>H</variation>
    <location>
        <position position="255"/>
    </location>
</feature>
<feature type="sequence variant" id="VAR_074057" description="In GM1G2; decrease in galactosidase activity; dbSNP:rs377174858." evidence="33">
    <original>G</original>
    <variation>E</variation>
    <location>
        <position position="262"/>
    </location>
</feature>
<feature type="sequence variant" id="VAR_013545" description="In GM1G3." evidence="44">
    <original>P</original>
    <variation>S</variation>
    <location>
        <position position="263"/>
    </location>
</feature>
<feature type="sequence variant" id="VAR_062355" description="In GM1G2." evidence="20">
    <original>L</original>
    <variation>S</variation>
    <location>
        <position position="264"/>
    </location>
</feature>
<feature type="sequence variant" id="VAR_013546" description="In GM1G3; dbSNP:rs1214295886." evidence="42">
    <original>N</original>
    <variation>S</variation>
    <location>
        <position position="266"/>
    </location>
</feature>
<feature type="sequence variant" id="VAR_013547" description="In GM1G3; originally classified as Morquio syndrome; dbSNP:rs376663785." evidence="7 28">
    <original>Y</original>
    <variation>D</variation>
    <location>
        <position position="270"/>
    </location>
</feature>
<feature type="sequence variant" id="VAR_038346" description="In GM1G1." evidence="20 21">
    <original>G</original>
    <variation>D</variation>
    <location>
        <position position="272"/>
    </location>
</feature>
<feature type="sequence variant" id="VAR_003333" description="In MPS4B; decreased galactosidase activity; dbSNP:rs72555362." evidence="7 18 27 28">
    <original>W</original>
    <variation>L</variation>
    <location>
        <position position="273"/>
    </location>
</feature>
<feature type="sequence variant" id="VAR_013548" description="In GM1G1 and GM1G3; dbSNP:rs745386663." evidence="7 14">
    <original>H</original>
    <variation>Y</variation>
    <location>
        <position position="281"/>
    </location>
</feature>
<feature type="sequence variant" id="VAR_074058" description="In GM1G3; decrease in galactosidase activity." evidence="33">
    <original>L</original>
    <variation>F</variation>
    <location>
        <position position="297"/>
    </location>
</feature>
<feature type="sequence variant" id="VAR_074059" description="In GM1G2; decrease in galactosidase activity." evidence="33">
    <original>F</original>
    <variation>L</variation>
    <location>
        <position position="314"/>
    </location>
</feature>
<feature type="sequence variant" id="VAR_003334" description="In GM1G1; dbSNP:rs72555361." evidence="24">
    <original>Y</original>
    <variation>C</variation>
    <location>
        <position position="316"/>
    </location>
</feature>
<feature type="sequence variant" id="VAR_062356" description="In GM1G1; uncertain significance." evidence="18">
    <original>N</original>
    <variation>H</variation>
    <location>
        <position position="318"/>
    </location>
</feature>
<feature type="sequence variant" id="VAR_062357" description="In GM1G1; 5.0% of wild-type galactosidase activity." evidence="28">
    <original>T</original>
    <variation>I</variation>
    <location>
        <position position="329"/>
    </location>
</feature>
<feature type="sequence variant" id="VAR_074060" description="In GM1G1; uncertain significance." evidence="33">
    <original>Y</original>
    <variation>C</variation>
    <location>
        <position position="331"/>
    </location>
</feature>
<feature type="sequence variant" id="VAR_062358" description="In GM1G1; 2.3% of wild-type galactosidase activity." evidence="28">
    <original>D</original>
    <variation>E</variation>
    <location>
        <position position="332"/>
    </location>
</feature>
<feature type="sequence variant" id="VAR_013549" description="In GM1G1; decrease in galactosidase activity; dbSNP:rs781658798." evidence="5 33">
    <original>D</original>
    <variation>N</variation>
    <location>
        <position position="332"/>
    </location>
</feature>
<feature type="sequence variant" id="VAR_062359" description="In GM1G2; 3.0% of wild-type galactosidase activity; the mutant protein is localized in the lysosomal-endosomal compartment." evidence="28">
    <original>Y</original>
    <variation>H</variation>
    <location>
        <position position="333"/>
    </location>
</feature>
<feature type="sequence variant" id="VAR_074061" description="In GM1G1 and GM1G2; loss of galactosidase activity; dbSNP:rs752177002." evidence="33">
    <original>L</original>
    <variation>P</variation>
    <location>
        <position position="337"/>
    </location>
</feature>
<feature type="sequence variant" id="VAR_062360" description="In GM1G1; dbSNP:rs749980306." evidence="20 28">
    <original>K</original>
    <variation>N</variation>
    <location>
        <position position="346"/>
    </location>
</feature>
<feature type="sequence variant" id="VAR_062361" description="In GM1G1." evidence="20">
    <original>Y</original>
    <variation>C</variation>
    <location>
        <position position="347"/>
    </location>
</feature>
<feature type="sequence variant" id="VAR_037941" description="In GM1G1." evidence="21">
    <location>
        <begin position="377"/>
        <end position="381"/>
    </location>
</feature>
<feature type="sequence variant" id="VAR_062362" description="In MPS4B; 24.0% of wild-type galactosidase activity." evidence="28">
    <original>P</original>
    <variation>A</variation>
    <location>
        <position position="397"/>
    </location>
</feature>
<feature type="sequence variant" id="VAR_013550" description="In MPS4B; 1.1% of wild-type galactosidase activity; dbSNP:rs72555369." evidence="7 28">
    <original>Q</original>
    <variation>P</variation>
    <location>
        <position position="408"/>
    </location>
</feature>
<feature type="sequence variant" id="VAR_074062" description="In GM1G2; decrease in galactosidase activity." evidence="33">
    <original>G</original>
    <variation>V</variation>
    <location>
        <position position="414"/>
    </location>
</feature>
<feature type="sequence variant" id="VAR_062363" description="In GM1G3; decrease in galactosidase activity." evidence="20 23">
    <original>T</original>
    <variation>K</variation>
    <location>
        <position position="420"/>
    </location>
</feature>
<feature type="sequence variant" id="VAR_062364" description="In GM1G1; loss of galactosidase activity; dbSNP:rs200181401." evidence="20 23">
    <original>T</original>
    <variation>P</variation>
    <location>
        <position position="420"/>
    </location>
</feature>
<feature type="sequence variant" id="VAR_062365" description="In GM1G1; dbSNP:rs758203004." evidence="20">
    <original>L</original>
    <variation>R</variation>
    <location>
        <position position="422"/>
    </location>
</feature>
<feature type="sequence variant" id="VAR_037942" description="In GM1-gangliosidosis; unclassified clinical type; dbSNP:rs267599773." evidence="21">
    <original>S</original>
    <variation>L</variation>
    <location>
        <position position="434"/>
    </location>
</feature>
<feature type="sequence variant" id="VAR_026133" description="Seems to have a modulating action in the expression of the severity of other mutations; dbSNP:rs34421970." evidence="9 20">
    <original>L</original>
    <variation>F</variation>
    <location>
        <position position="436"/>
    </location>
</feature>
<feature type="sequence variant" id="VAR_013551" description="In GM1G3 and MPS4B; mild form; 5.7% of wild-type galactosidase activity; dbSNP:rs72555367." evidence="8 16 28">
    <original>G</original>
    <variation>E</variation>
    <location>
        <position position="438"/>
    </location>
</feature>
<feature type="sequence variant" id="VAR_062366" description="In GM1G1; loss of galactosidase activity; dbSNP:rs780724173." evidence="20 23">
    <original>D</original>
    <variation>N</variation>
    <location>
        <position position="441"/>
    </location>
</feature>
<feature type="sequence variant" id="VAR_062367" description="In GM1G1; dbSNP:rs564428355." evidence="28">
    <original>R</original>
    <variation>Q</variation>
    <location>
        <position position="442"/>
    </location>
</feature>
<feature type="sequence variant" id="VAR_062368" description="In MPS4B; loss of galactosidase activity." evidence="20 23">
    <original>Y</original>
    <variation>C</variation>
    <location>
        <position position="444"/>
    </location>
</feature>
<feature type="sequence variant" id="VAR_003335" description="In GM1G3; dbSNP:rs28934886." evidence="24">
    <original>R</original>
    <variation>Q</variation>
    <location>
        <position position="457"/>
    </location>
</feature>
<feature type="sequence variant" id="VAR_008678" description="In MPS4B; loss of galactosidase activity; dbSNP:rs72555365." evidence="36">
    <original>R</original>
    <variation>C</variation>
    <location>
        <position position="482"/>
    </location>
</feature>
<feature type="sequence variant" id="VAR_003336" description="In MPS4B and GM1G1; severe decrease in galactosidase activity; dbSNP:rs72555391." evidence="4 11 14 18 27 33">
    <original>R</original>
    <variation>H</variation>
    <location>
        <position position="482"/>
    </location>
</feature>
<feature type="sequence variant" id="VAR_013552" description="In MPS4B; mild form; fibroblasts from MPS4B compound heterozygotes for K-484 and A-500 have 1.9% of wild-type galactosidase activity; dbSNP:rs968221254." evidence="8">
    <original>N</original>
    <variation>K</variation>
    <location>
        <position position="484"/>
    </location>
</feature>
<feature type="sequence variant" id="VAR_008679" description="In GM1G1; dbSNP:rs780232995." evidence="3">
    <original>D</original>
    <variation>N</variation>
    <location>
        <position position="491"/>
    </location>
</feature>
<feature type="sequence variant" id="VAR_037943" description="In GM1G1." evidence="21">
    <original>D</original>
    <variation>Y</variation>
    <location>
        <position position="491"/>
    </location>
</feature>
<feature type="sequence variant" id="VAR_074063" description="In GM1G2; decrease in galactosidase activity; dbSNP:rs1172435886." evidence="33">
    <original>K</original>
    <variation>N</variation>
    <location>
        <position position="493"/>
    </location>
</feature>
<feature type="sequence variant" id="VAR_013553" description="In GM1G1; dbSNP:rs1312626201." evidence="27">
    <original>G</original>
    <variation>C</variation>
    <location>
        <position position="494"/>
    </location>
</feature>
<feature type="sequence variant" id="VAR_062369" description="In MPS4B; loss of galactosidase activity." evidence="20 23">
    <original>G</original>
    <variation>S</variation>
    <location>
        <position position="494"/>
    </location>
</feature>
<feature type="sequence variant" id="VAR_013554" description="In MPS4B; mild form; 2.1% of wild-type galactosidase activity; dbSNP:rs72555368." evidence="7 8 20 28">
    <original>T</original>
    <variation>A</variation>
    <location>
        <position position="500"/>
    </location>
</feature>
<feature type="sequence variant" id="VAR_003337" description="In MPS4B; also in a patient with a slowly progressive form of GM1-gangliosidosis; loss of galactosidase activity; dbSNP:rs72555363." evidence="18 27 42">
    <original>W</original>
    <variation>C</variation>
    <location>
        <position position="509"/>
    </location>
</feature>
<feature type="sequence variant" id="VAR_074064" description="In GM1G1; decrease in galactosidase activity." evidence="33">
    <original>L</original>
    <variation>P</variation>
    <location>
        <position position="514"/>
    </location>
</feature>
<feature type="sequence variant" id="VAR_008680" description="Galactosidase activity is reduced to 25%-30% of wild-type values; dbSNP:rs4302331." evidence="3 14 19 20 23 33">
    <original>R</original>
    <variation>C</variation>
    <location>
        <position position="521"/>
    </location>
</feature>
<feature type="sequence variant" id="VAR_008681" description="Results in near-normal activity corresponding to 60%-100% of the wild-type depending on the expression system; dbSNP:rs73826339." evidence="3 5 20 23 43">
    <original>S</original>
    <variation>G</variation>
    <location>
        <position position="532"/>
    </location>
</feature>
<feature type="sequence variant" id="VAR_037944" description="In GM1G1; dbSNP:rs776327443." evidence="21">
    <original>P</original>
    <variation>L</variation>
    <location>
        <position position="549"/>
    </location>
</feature>
<feature type="sequence variant" id="VAR_037945" description="In GM1-gangliosidosis; unclassified clinical type." evidence="21">
    <original>G</original>
    <variation>E</variation>
    <location>
        <position position="554"/>
    </location>
</feature>
<feature type="sequence variant" id="VAR_008682" description="In GM1G1; dbSNP:rs371582179." evidence="39">
    <original>K</original>
    <variation>R</variation>
    <location>
        <position position="578"/>
    </location>
</feature>
<feature type="sequence variant" id="VAR_013555" description="In GM1G1 and GM1G2; loss of galactosidase activity; severe mutation; dbSNP:rs746350513." evidence="4 14">
    <original>G</original>
    <variation>D</variation>
    <location>
        <position position="579"/>
    </location>
</feature>
<feature type="sequence variant" id="VAR_037946" description="In GM1G1; loss of galactosidase activity; dbSNP:rs794727165." evidence="20 21 23">
    <original>R</original>
    <variation>C</variation>
    <location>
        <position position="590"/>
    </location>
</feature>
<feature type="sequence variant" id="VAR_008683" description="In GM1G2; dbSNP:rs398123351." evidence="39">
    <original>R</original>
    <variation>H</variation>
    <location>
        <position position="590"/>
    </location>
</feature>
<feature type="sequence variant" id="VAR_008684" description="In GM1G1; with cardiac involvement in some patients; loss of galactosidase activity; severe mutation; causes a rapid degradation of the protein precursor; dbSNP:rs72555371." evidence="4 14 45">
    <original>Y</original>
    <variation>C</variation>
    <location>
        <position position="591"/>
    </location>
</feature>
<feature type="sequence variant" id="VAR_008685" description="In GM1G1; with cardiac involvement in some patients; loss of galactosidase activity; severe mutation; causes a rapid degradation of the protein precursor; dbSNP:rs72555373." evidence="4 14 45">
    <original>Y</original>
    <variation>N</variation>
    <location>
        <position position="591"/>
    </location>
</feature>
<feature type="sequence variant" id="VAR_037947" description="Reduction of galactosidase activity; dbSNP:rs201807974." evidence="22">
    <original>R</original>
    <variation>W</variation>
    <location>
        <position position="595"/>
    </location>
</feature>
<feature type="sequence variant" id="VAR_074065" description="In GM1G2; decrease in galactosidase activity." evidence="33">
    <original>P</original>
    <variation>L</variation>
    <location>
        <position position="597"/>
    </location>
</feature>
<feature type="sequence variant" id="VAR_062370" description="In GM1G1; 2.1% of wild-type galactosidase activity." evidence="28">
    <original>P</original>
    <variation>S</variation>
    <location>
        <position position="597"/>
    </location>
</feature>
<feature type="sequence variant" id="VAR_074066" description="In GM1G2; decrease in galactosidase activity." evidence="33">
    <original>T</original>
    <variation>I</variation>
    <location>
        <position position="600"/>
    </location>
</feature>
<feature type="sequence variant" id="VAR_008686" description="In GM1G2." evidence="39">
    <original>E</original>
    <variation>G</variation>
    <location>
        <position position="632"/>
    </location>
</feature>
<feature type="sequence conflict" description="In Ref. 4; BAH13196." evidence="51" ref="4">
    <original>H</original>
    <variation>Y</variation>
    <location>
        <position position="89"/>
    </location>
</feature>
<feature type="sequence conflict" description="In Ref. 1; AAA51822." evidence="51" ref="1">
    <original>R</original>
    <variation>A</variation>
    <location>
        <position position="201"/>
    </location>
</feature>
<feature type="strand" evidence="63">
    <location>
        <begin position="32"/>
        <end position="35"/>
    </location>
</feature>
<feature type="turn" evidence="63">
    <location>
        <begin position="36"/>
        <end position="39"/>
    </location>
</feature>
<feature type="strand" evidence="63">
    <location>
        <begin position="40"/>
        <end position="43"/>
    </location>
</feature>
<feature type="strand" evidence="63">
    <location>
        <begin position="46"/>
        <end position="48"/>
    </location>
</feature>
<feature type="strand" evidence="63">
    <location>
        <begin position="51"/>
        <end position="54"/>
    </location>
</feature>
<feature type="helix" evidence="63">
    <location>
        <begin position="57"/>
        <end position="59"/>
    </location>
</feature>
<feature type="helix" evidence="63">
    <location>
        <begin position="62"/>
        <end position="64"/>
    </location>
</feature>
<feature type="helix" evidence="63">
    <location>
        <begin position="65"/>
        <end position="74"/>
    </location>
</feature>
<feature type="strand" evidence="63">
    <location>
        <begin position="78"/>
        <end position="83"/>
    </location>
</feature>
<feature type="helix" evidence="63">
    <location>
        <begin position="86"/>
        <end position="89"/>
    </location>
</feature>
<feature type="helix" evidence="63">
    <location>
        <begin position="100"/>
        <end position="102"/>
    </location>
</feature>
<feature type="helix" evidence="63">
    <location>
        <begin position="104"/>
        <end position="113"/>
    </location>
</feature>
<feature type="strand" evidence="63">
    <location>
        <begin position="117"/>
        <end position="121"/>
    </location>
</feature>
<feature type="helix" evidence="63">
    <location>
        <begin position="131"/>
        <end position="134"/>
    </location>
</feature>
<feature type="helix" evidence="63">
    <location>
        <begin position="137"/>
        <end position="141"/>
    </location>
</feature>
<feature type="strand" evidence="63">
    <location>
        <begin position="147"/>
        <end position="149"/>
    </location>
</feature>
<feature type="helix" evidence="63">
    <location>
        <begin position="152"/>
        <end position="169"/>
    </location>
</feature>
<feature type="helix" evidence="63">
    <location>
        <begin position="170"/>
        <end position="172"/>
    </location>
</feature>
<feature type="helix" evidence="63">
    <location>
        <begin position="174"/>
        <end position="176"/>
    </location>
</feature>
<feature type="strand" evidence="63">
    <location>
        <begin position="178"/>
        <end position="184"/>
    </location>
</feature>
<feature type="strand" evidence="64">
    <location>
        <begin position="186"/>
        <end position="188"/>
    </location>
</feature>
<feature type="helix" evidence="63">
    <location>
        <begin position="189"/>
        <end position="191"/>
    </location>
</feature>
<feature type="helix" evidence="63">
    <location>
        <begin position="197"/>
        <end position="211"/>
    </location>
</feature>
<feature type="strand" evidence="63">
    <location>
        <begin position="213"/>
        <end position="224"/>
    </location>
</feature>
<feature type="helix" evidence="63">
    <location>
        <begin position="225"/>
        <end position="231"/>
    </location>
</feature>
<feature type="strand" evidence="63">
    <location>
        <begin position="236"/>
        <end position="241"/>
    </location>
</feature>
<feature type="helix" evidence="63">
    <location>
        <begin position="248"/>
        <end position="258"/>
    </location>
</feature>
<feature type="strand" evidence="63">
    <location>
        <begin position="260"/>
        <end position="262"/>
    </location>
</feature>
<feature type="strand" evidence="63">
    <location>
        <begin position="265"/>
        <end position="272"/>
    </location>
</feature>
<feature type="helix" evidence="63">
    <location>
        <begin position="286"/>
        <end position="298"/>
    </location>
</feature>
<feature type="strand" evidence="63">
    <location>
        <begin position="302"/>
        <end position="306"/>
    </location>
</feature>
<feature type="turn" evidence="63">
    <location>
        <begin position="322"/>
        <end position="324"/>
    </location>
</feature>
<feature type="helix" evidence="63">
    <location>
        <begin position="345"/>
        <end position="354"/>
    </location>
</feature>
<feature type="turn" evidence="63">
    <location>
        <begin position="355"/>
        <end position="357"/>
    </location>
</feature>
<feature type="strand" evidence="63">
    <location>
        <begin position="375"/>
        <end position="378"/>
    </location>
</feature>
<feature type="strand" evidence="63">
    <location>
        <begin position="380"/>
        <end position="384"/>
    </location>
</feature>
<feature type="turn" evidence="63">
    <location>
        <begin position="385"/>
        <end position="388"/>
    </location>
</feature>
<feature type="helix" evidence="63">
    <location>
        <begin position="389"/>
        <end position="392"/>
    </location>
</feature>
<feature type="strand" evidence="63">
    <location>
        <begin position="398"/>
        <end position="402"/>
    </location>
</feature>
<feature type="helix" evidence="63">
    <location>
        <begin position="407"/>
        <end position="409"/>
    </location>
</feature>
<feature type="strand" evidence="63">
    <location>
        <begin position="413"/>
        <end position="421"/>
    </location>
</feature>
<feature type="strand" evidence="63">
    <location>
        <begin position="426"/>
        <end position="433"/>
    </location>
</feature>
<feature type="strand" evidence="63">
    <location>
        <begin position="439"/>
        <end position="447"/>
    </location>
</feature>
<feature type="strand" evidence="63">
    <location>
        <begin position="450"/>
        <end position="456"/>
    </location>
</feature>
<feature type="turn" evidence="63">
    <location>
        <begin position="457"/>
        <end position="459"/>
    </location>
</feature>
<feature type="strand" evidence="63">
    <location>
        <begin position="462"/>
        <end position="467"/>
    </location>
</feature>
<feature type="strand" evidence="63">
    <location>
        <begin position="472"/>
        <end position="478"/>
    </location>
</feature>
<feature type="helix" evidence="63">
    <location>
        <begin position="487"/>
        <end position="489"/>
    </location>
</feature>
<feature type="strand" evidence="63">
    <location>
        <begin position="509"/>
        <end position="513"/>
    </location>
</feature>
<feature type="helix" evidence="63">
    <location>
        <begin position="516"/>
        <end position="521"/>
    </location>
</feature>
<feature type="turn" evidence="63">
    <location>
        <begin position="522"/>
        <end position="527"/>
    </location>
</feature>
<feature type="strand" evidence="63">
    <location>
        <begin position="550"/>
        <end position="556"/>
    </location>
</feature>
<feature type="strand" evidence="63">
    <location>
        <begin position="568"/>
        <end position="572"/>
    </location>
</feature>
<feature type="strand" evidence="63">
    <location>
        <begin position="578"/>
        <end position="583"/>
    </location>
</feature>
<feature type="strand" evidence="63">
    <location>
        <begin position="586"/>
        <end position="591"/>
    </location>
</feature>
<feature type="turn" evidence="63">
    <location>
        <begin position="593"/>
        <end position="595"/>
    </location>
</feature>
<feature type="strand" evidence="63">
    <location>
        <begin position="601"/>
        <end position="603"/>
    </location>
</feature>
<feature type="helix" evidence="63">
    <location>
        <begin position="605"/>
        <end position="607"/>
    </location>
</feature>
<feature type="strand" evidence="63">
    <location>
        <begin position="610"/>
        <end position="612"/>
    </location>
</feature>
<feature type="strand" evidence="63">
    <location>
        <begin position="614"/>
        <end position="622"/>
    </location>
</feature>
<feature type="strand" evidence="63">
    <location>
        <begin position="627"/>
        <end position="629"/>
    </location>
</feature>
<feature type="helix" evidence="63">
    <location>
        <begin position="631"/>
        <end position="633"/>
    </location>
</feature>
<feature type="strand" evidence="63">
    <location>
        <begin position="634"/>
        <end position="641"/>
    </location>
</feature>
<sequence>MPGFLVRILPLLLVLLLLGPTRGLRNATQRMFEIDYSRDSFLKDGQPFRYISGSIHYSRVPRFYWKDRLLKMKMAGLNAIQTYVPWNFHEPWPGQYQFSEDHDVEYFLRLAHELGLLVILRPGPYICAEWEMGGLPAWLLEKESILLRSSDPDYLAAVDKWLGVLLPKMKPLLYQNGGPVITVQVENEYGSYFACDFDYLRFLQKRFRHHLGDDVVLFTTDGAHKTFLKCGALQGLYTTVDFGTGSNITDAFLSQRKCEPKGPLINSEFYTGWLDHWGQPHSTIKTEAVASSLYDILARGASVNLYMFIGGTNFAYWNGANSPYAAQPTSYDYDAPLSEAGDLTEKYFALRNIIQKFEKVPEGPIPPSTPKFAYGKVTLEKLKTVGAALDILCPSGPIKSLYPLTFIQVKQHYGFVLYRTTLPQDCSNPAPLSSPLNGVHDRAYVAVDGIPQGVLERNNVITLNITGKAGATLDLLVENMGRVNYGAYINDFKGLVSNLTLSSNILTDWTIFPLDTEDAVRSHLGGWGHRDSGHHDEAWAHNSSNYTLPAFYMGNFSIPSGIPDLPQDTFIQFPGWTKGQVWINGFNLGRYWPARGPQLTLFVPQHILMTSAPNTITVLELEWAPCSSDDPELCAVTFVDRPVIGSSVTYDHPSKPVEKRLMPPPPQKNKDSWLDHV</sequence>